<dbReference type="EMBL" id="AF062089">
    <property type="protein sequence ID" value="AAD12183.1"/>
    <property type="molecule type" value="mRNA"/>
</dbReference>
<dbReference type="EMBL" id="AF091453">
    <property type="protein sequence ID" value="AAD38081.1"/>
    <property type="molecule type" value="mRNA"/>
</dbReference>
<dbReference type="EMBL" id="AF074382">
    <property type="protein sequence ID" value="AAC36330.1"/>
    <property type="molecule type" value="mRNA"/>
</dbReference>
<dbReference type="EMBL" id="AJ271718">
    <property type="protein sequence ID" value="CAB93146.1"/>
    <property type="molecule type" value="Genomic_DNA"/>
</dbReference>
<dbReference type="EMBL" id="AF261086">
    <property type="protein sequence ID" value="AAF99679.1"/>
    <property type="molecule type" value="mRNA"/>
</dbReference>
<dbReference type="EMBL" id="AY114157">
    <property type="protein sequence ID" value="AAM44073.1"/>
    <property type="molecule type" value="mRNA"/>
</dbReference>
<dbReference type="EMBL" id="AK000593">
    <property type="status" value="NOT_ANNOTATED_CDS"/>
    <property type="molecule type" value="mRNA"/>
</dbReference>
<dbReference type="EMBL" id="BT019621">
    <property type="protein sequence ID" value="AAV38427.1"/>
    <property type="molecule type" value="mRNA"/>
</dbReference>
<dbReference type="EMBL" id="AF277315">
    <property type="protein sequence ID" value="AAL27012.1"/>
    <property type="molecule type" value="Genomic_DNA"/>
</dbReference>
<dbReference type="EMBL" id="BC000299">
    <property type="protein sequence ID" value="AAH00299.1"/>
    <property type="molecule type" value="mRNA"/>
</dbReference>
<dbReference type="EMBL" id="BC012114">
    <property type="protein sequence ID" value="AAH12114.1"/>
    <property type="molecule type" value="mRNA"/>
</dbReference>
<dbReference type="EMBL" id="BC046922">
    <property type="protein sequence ID" value="AAH46922.1"/>
    <property type="molecule type" value="mRNA"/>
</dbReference>
<dbReference type="EMBL" id="BC050612">
    <property type="protein sequence ID" value="AAH50612.1"/>
    <property type="molecule type" value="mRNA"/>
</dbReference>
<dbReference type="CCDS" id="CCDS14757.1">
    <molecule id="Q9Y6K9-1"/>
</dbReference>
<dbReference type="CCDS" id="CCDS48196.1">
    <molecule id="Q9Y6K9-2"/>
</dbReference>
<dbReference type="CCDS" id="CCDS48197.1">
    <molecule id="Q9Y6K9-3"/>
</dbReference>
<dbReference type="RefSeq" id="NP_001093326.2">
    <molecule id="Q9Y6K9-2"/>
    <property type="nucleotide sequence ID" value="NM_001099856.6"/>
</dbReference>
<dbReference type="RefSeq" id="NP_001093327.1">
    <molecule id="Q9Y6K9-1"/>
    <property type="nucleotide sequence ID" value="NM_001099857.5"/>
</dbReference>
<dbReference type="RefSeq" id="NP_001138727.1">
    <molecule id="Q9Y6K9-3"/>
    <property type="nucleotide sequence ID" value="NM_001145255.4"/>
</dbReference>
<dbReference type="RefSeq" id="NP_001308325.1">
    <molecule id="Q9Y6K9-1"/>
    <property type="nucleotide sequence ID" value="NM_001321396.3"/>
</dbReference>
<dbReference type="RefSeq" id="NP_001308326.1">
    <property type="nucleotide sequence ID" value="NM_001321397.1"/>
</dbReference>
<dbReference type="RefSeq" id="NP_001364241.1">
    <molecule id="Q9Y6K9-1"/>
    <property type="nucleotide sequence ID" value="NM_001377312.1"/>
</dbReference>
<dbReference type="RefSeq" id="NP_003630.1">
    <molecule id="Q9Y6K9-1"/>
    <property type="nucleotide sequence ID" value="NM_003639.4"/>
</dbReference>
<dbReference type="PDB" id="2JVX">
    <property type="method" value="NMR"/>
    <property type="chains" value="A=394-419"/>
</dbReference>
<dbReference type="PDB" id="2JVY">
    <property type="method" value="NMR"/>
    <property type="chains" value="A=394-419"/>
</dbReference>
<dbReference type="PDB" id="3BRT">
    <property type="method" value="X-ray"/>
    <property type="resolution" value="2.25 A"/>
    <property type="chains" value="B/D=44-111"/>
</dbReference>
<dbReference type="PDB" id="3BRV">
    <property type="method" value="X-ray"/>
    <property type="resolution" value="2.20 A"/>
    <property type="chains" value="B/D=44-111"/>
</dbReference>
<dbReference type="PDB" id="3CL3">
    <property type="method" value="X-ray"/>
    <property type="resolution" value="3.20 A"/>
    <property type="chains" value="D/E=150-272"/>
</dbReference>
<dbReference type="PDB" id="3FX0">
    <property type="method" value="X-ray"/>
    <property type="resolution" value="3.20 A"/>
    <property type="chains" value="A/B=246-337"/>
</dbReference>
<dbReference type="PDB" id="4BWN">
    <property type="method" value="X-ray"/>
    <property type="resolution" value="2.27 A"/>
    <property type="chains" value="A/B=258-344"/>
</dbReference>
<dbReference type="PDB" id="5AAY">
    <property type="method" value="NMR"/>
    <property type="chains" value="A=392-419"/>
</dbReference>
<dbReference type="PDB" id="5LDE">
    <property type="method" value="X-ray"/>
    <property type="resolution" value="3.38 A"/>
    <property type="chains" value="R/S=230-249"/>
</dbReference>
<dbReference type="PDB" id="6MI3">
    <property type="method" value="X-ray"/>
    <property type="resolution" value="1.78 A"/>
    <property type="chains" value="A/B=38-129"/>
</dbReference>
<dbReference type="PDB" id="6MI4">
    <property type="method" value="X-ray"/>
    <property type="resolution" value="2.50 A"/>
    <property type="chains" value="A/B=38-129"/>
</dbReference>
<dbReference type="PDB" id="6XX0">
    <property type="method" value="X-ray"/>
    <property type="resolution" value="2.60 A"/>
    <property type="chains" value="A/B=258-344"/>
</dbReference>
<dbReference type="PDB" id="6YEK">
    <property type="method" value="X-ray"/>
    <property type="resolution" value="3.20 A"/>
    <property type="chains" value="A/B=258-344"/>
</dbReference>
<dbReference type="PDB" id="7T2U">
    <property type="method" value="X-ray"/>
    <property type="resolution" value="2.10 A"/>
    <property type="chains" value="E/F=226-235"/>
</dbReference>
<dbReference type="PDB" id="7TV4">
    <property type="method" value="X-ray"/>
    <property type="resolution" value="4.20 A"/>
    <property type="chains" value="B/D=257-346"/>
</dbReference>
<dbReference type="PDB" id="8U7C">
    <property type="method" value="X-ray"/>
    <property type="resolution" value="1.44 A"/>
    <property type="chains" value="A/B/C/D=51-113"/>
</dbReference>
<dbReference type="PDB" id="9AZJ">
    <property type="method" value="X-ray"/>
    <property type="resolution" value="3.32 A"/>
    <property type="chains" value="A/B/C/D=257-364"/>
</dbReference>
<dbReference type="PDBsum" id="2JVX"/>
<dbReference type="PDBsum" id="2JVY"/>
<dbReference type="PDBsum" id="3BRT"/>
<dbReference type="PDBsum" id="3BRV"/>
<dbReference type="PDBsum" id="3CL3"/>
<dbReference type="PDBsum" id="3FX0"/>
<dbReference type="PDBsum" id="4BWN"/>
<dbReference type="PDBsum" id="5AAY"/>
<dbReference type="PDBsum" id="5LDE"/>
<dbReference type="PDBsum" id="6MI3"/>
<dbReference type="PDBsum" id="6MI4"/>
<dbReference type="PDBsum" id="6XX0"/>
<dbReference type="PDBsum" id="6YEK"/>
<dbReference type="PDBsum" id="7T2U"/>
<dbReference type="PDBsum" id="7TV4"/>
<dbReference type="PDBsum" id="8U7C"/>
<dbReference type="PDBsum" id="9AZJ"/>
<dbReference type="BMRB" id="Q9Y6K9"/>
<dbReference type="SMR" id="Q9Y6K9"/>
<dbReference type="BioGRID" id="114089">
    <property type="interactions" value="458"/>
</dbReference>
<dbReference type="ComplexPortal" id="CPX-3269">
    <property type="entry name" value="IkappaB kinase complex"/>
</dbReference>
<dbReference type="CORUM" id="Q9Y6K9"/>
<dbReference type="DIP" id="DIP-27528N"/>
<dbReference type="FunCoup" id="Q9Y6K9">
    <property type="interactions" value="2292"/>
</dbReference>
<dbReference type="IntAct" id="Q9Y6K9">
    <property type="interactions" value="294"/>
</dbReference>
<dbReference type="MINT" id="Q9Y6K9"/>
<dbReference type="STRING" id="9606.ENSP00000483825"/>
<dbReference type="BindingDB" id="Q9Y6K9"/>
<dbReference type="ChEMBL" id="CHEMBL4967"/>
<dbReference type="DrugBank" id="DB04998">
    <property type="generic name" value="AGRO100"/>
</dbReference>
<dbReference type="DrugBank" id="DB05289">
    <property type="generic name" value="Tarenflurbil"/>
</dbReference>
<dbReference type="MoonDB" id="Q9Y6K9">
    <property type="type" value="Predicted"/>
</dbReference>
<dbReference type="GlyGen" id="Q9Y6K9">
    <property type="glycosylation" value="1 site, 1 O-linked glycan (1 site)"/>
</dbReference>
<dbReference type="iPTMnet" id="Q9Y6K9"/>
<dbReference type="PhosphoSitePlus" id="Q9Y6K9"/>
<dbReference type="BioMuta" id="IKBKG"/>
<dbReference type="DMDM" id="6685695"/>
<dbReference type="CPTAC" id="CPTAC-1044"/>
<dbReference type="CPTAC" id="CPTAC-806"/>
<dbReference type="jPOST" id="Q9Y6K9"/>
<dbReference type="MassIVE" id="Q9Y6K9"/>
<dbReference type="PaxDb" id="9606-ENSP00000483825"/>
<dbReference type="PeptideAtlas" id="Q9Y6K9"/>
<dbReference type="ProteomicsDB" id="86716">
    <molecule id="Q9Y6K9-1"/>
</dbReference>
<dbReference type="ProteomicsDB" id="86717">
    <molecule id="Q9Y6K9-2"/>
</dbReference>
<dbReference type="ProteomicsDB" id="86718">
    <molecule id="Q9Y6K9-3"/>
</dbReference>
<dbReference type="Pumba" id="Q9Y6K9"/>
<dbReference type="Antibodypedia" id="73338">
    <property type="antibodies" value="1264 antibodies from 48 providers"/>
</dbReference>
<dbReference type="DNASU" id="8517"/>
<dbReference type="Ensembl" id="ENST00000422680.6">
    <molecule id="Q9Y6K9-1"/>
    <property type="protein sequence ID" value="ENSP00000390368.3"/>
    <property type="gene ID" value="ENSG00000269335.7"/>
</dbReference>
<dbReference type="Ensembl" id="ENST00000440286.6">
    <molecule id="Q9Y6K9-1"/>
    <property type="protein sequence ID" value="ENSP00000394934.2"/>
    <property type="gene ID" value="ENSG00000269335.7"/>
</dbReference>
<dbReference type="Ensembl" id="ENST00000445622.6">
    <molecule id="Q9Y6K9-1"/>
    <property type="protein sequence ID" value="ENSP00000395205.2"/>
    <property type="gene ID" value="ENSG00000269335.7"/>
</dbReference>
<dbReference type="Ensembl" id="ENST00000594239.6">
    <molecule id="Q9Y6K9-1"/>
    <property type="protein sequence ID" value="ENSP00000471166.1"/>
    <property type="gene ID" value="ENSG00000269335.7"/>
</dbReference>
<dbReference type="Ensembl" id="ENST00000611071.4">
    <molecule id="Q9Y6K9-1"/>
    <property type="protein sequence ID" value="ENSP00000479662.1"/>
    <property type="gene ID" value="ENSG00000269335.7"/>
</dbReference>
<dbReference type="Ensembl" id="ENST00000611176.4">
    <molecule id="Q9Y6K9-3"/>
    <property type="protein sequence ID" value="ENSP00000478616.1"/>
    <property type="gene ID" value="ENSG00000269335.7"/>
</dbReference>
<dbReference type="Ensembl" id="ENST00000618670.4">
    <molecule id="Q9Y6K9-2"/>
    <property type="protein sequence ID" value="ENSP00000483825.1"/>
    <property type="gene ID" value="ENSG00000269335.7"/>
</dbReference>
<dbReference type="GeneID" id="8517"/>
<dbReference type="KEGG" id="hsa:8517"/>
<dbReference type="MANE-Select" id="ENST00000594239.6">
    <property type="protein sequence ID" value="ENSP00000471166.1"/>
    <property type="RefSeq nucleotide sequence ID" value="NM_001099857.5"/>
    <property type="RefSeq protein sequence ID" value="NP_001093327.1"/>
</dbReference>
<dbReference type="UCSC" id="uc033fbu.1">
    <molecule id="Q9Y6K9-1"/>
    <property type="organism name" value="human"/>
</dbReference>
<dbReference type="AGR" id="HGNC:5961"/>
<dbReference type="CTD" id="8517"/>
<dbReference type="DisGeNET" id="8517"/>
<dbReference type="GeneCards" id="IKBKG"/>
<dbReference type="GeneReviews" id="IKBKG"/>
<dbReference type="HGNC" id="HGNC:5961">
    <property type="gene designation" value="IKBKG"/>
</dbReference>
<dbReference type="HPA" id="ENSG00000269335">
    <property type="expression patterns" value="Low tissue specificity"/>
</dbReference>
<dbReference type="MalaCards" id="IKBKG"/>
<dbReference type="MIM" id="300248">
    <property type="type" value="gene"/>
</dbReference>
<dbReference type="MIM" id="300291">
    <property type="type" value="phenotype"/>
</dbReference>
<dbReference type="MIM" id="300636">
    <property type="type" value="phenotype"/>
</dbReference>
<dbReference type="MIM" id="301081">
    <property type="type" value="phenotype"/>
</dbReference>
<dbReference type="MIM" id="308300">
    <property type="type" value="phenotype"/>
</dbReference>
<dbReference type="neXtProt" id="NX_Q9Y6K9"/>
<dbReference type="OpenTargets" id="ENSG00000269335"/>
<dbReference type="Orphanet" id="69088">
    <property type="disease" value="Anhidrotic ectodermal dysplasia-immunodeficiency-osteopetrosis-lymphedema syndrome"/>
</dbReference>
<dbReference type="Orphanet" id="98813">
    <property type="disease" value="Hypohidrotic ectodermal dysplasia with immunodeficiency"/>
</dbReference>
<dbReference type="Orphanet" id="464">
    <property type="disease" value="Incontinentia pigmenti"/>
</dbReference>
<dbReference type="Orphanet" id="319612">
    <property type="disease" value="X-linked mendelian susceptibility to mycobacterial diseases due to IKBKG deficiency"/>
</dbReference>
<dbReference type="PharmGKB" id="PA29777"/>
<dbReference type="VEuPathDB" id="HostDB:ENSG00000269335"/>
<dbReference type="eggNOG" id="ENOG502R4ZD">
    <property type="taxonomic scope" value="Eukaryota"/>
</dbReference>
<dbReference type="GeneTree" id="ENSGT00530000063808"/>
<dbReference type="InParanoid" id="Q9Y6K9"/>
<dbReference type="OMA" id="VAMRKNF"/>
<dbReference type="OrthoDB" id="6343844at2759"/>
<dbReference type="PAN-GO" id="Q9Y6K9">
    <property type="GO annotations" value="5 GO annotations based on evolutionary models"/>
</dbReference>
<dbReference type="PhylomeDB" id="Q9Y6K9"/>
<dbReference type="TreeFam" id="TF326608"/>
<dbReference type="PathwayCommons" id="Q9Y6K9"/>
<dbReference type="Reactome" id="R-HSA-1169091">
    <property type="pathway name" value="Activation of NF-kappaB in B cells"/>
</dbReference>
<dbReference type="Reactome" id="R-HSA-1236974">
    <property type="pathway name" value="ER-Phagosome pathway"/>
</dbReference>
<dbReference type="Reactome" id="R-HSA-168638">
    <property type="pathway name" value="NOD1/2 Signaling Pathway"/>
</dbReference>
<dbReference type="Reactome" id="R-HSA-168927">
    <property type="pathway name" value="TICAM1, RIP1-mediated IKK complex recruitment"/>
</dbReference>
<dbReference type="Reactome" id="R-HSA-1810476">
    <property type="pathway name" value="RIP-mediated NFkB activation via ZBP1"/>
</dbReference>
<dbReference type="Reactome" id="R-HSA-202424">
    <property type="pathway name" value="Downstream TCR signaling"/>
</dbReference>
<dbReference type="Reactome" id="R-HSA-2871837">
    <property type="pathway name" value="FCERI mediated NF-kB activation"/>
</dbReference>
<dbReference type="Reactome" id="R-HSA-445989">
    <property type="pathway name" value="TAK1-dependent IKK and NF-kappa-B activation"/>
</dbReference>
<dbReference type="Reactome" id="R-HSA-450302">
    <property type="pathway name" value="activated TAK1 mediates p38 MAPK activation"/>
</dbReference>
<dbReference type="Reactome" id="R-HSA-450321">
    <property type="pathway name" value="JNK (c-Jun kinases) phosphorylation and activation mediated by activated human TAK1"/>
</dbReference>
<dbReference type="Reactome" id="R-HSA-4755510">
    <property type="pathway name" value="SUMOylation of immune response proteins"/>
</dbReference>
<dbReference type="Reactome" id="R-HSA-5357905">
    <property type="pathway name" value="Regulation of TNFR1 signaling"/>
</dbReference>
<dbReference type="Reactome" id="R-HSA-5357956">
    <property type="pathway name" value="TNFR1-induced NF-kappa-B signaling pathway"/>
</dbReference>
<dbReference type="Reactome" id="R-HSA-5602636">
    <property type="pathway name" value="IKBKB deficiency causes SCID"/>
</dbReference>
<dbReference type="Reactome" id="R-HSA-5603027">
    <property type="pathway name" value="IKBKG deficiency causes anhidrotic ectodermal dysplasia with immunodeficiency (EDA-ID) (via TLR)"/>
</dbReference>
<dbReference type="Reactome" id="R-HSA-5603029">
    <property type="pathway name" value="IkBA variant leads to EDA-ID"/>
</dbReference>
<dbReference type="Reactome" id="R-HSA-5607764">
    <property type="pathway name" value="CLEC7A (Dectin-1) signaling"/>
</dbReference>
<dbReference type="Reactome" id="R-HSA-5684264">
    <property type="pathway name" value="MAP3K8 (TPL2)-dependent MAPK1/3 activation"/>
</dbReference>
<dbReference type="Reactome" id="R-HSA-5689880">
    <property type="pathway name" value="Ub-specific processing proteases"/>
</dbReference>
<dbReference type="Reactome" id="R-HSA-5689896">
    <property type="pathway name" value="Ovarian tumor domain proteases"/>
</dbReference>
<dbReference type="Reactome" id="R-HSA-9020702">
    <property type="pathway name" value="Interleukin-1 signaling"/>
</dbReference>
<dbReference type="Reactome" id="R-HSA-933542">
    <property type="pathway name" value="TRAF6 mediated NF-kB activation"/>
</dbReference>
<dbReference type="Reactome" id="R-HSA-933543">
    <property type="pathway name" value="NF-kB activation through FADD/RIP-1 pathway mediated by caspase-8 and -10"/>
</dbReference>
<dbReference type="Reactome" id="R-HSA-937039">
    <property type="pathway name" value="IRAK1 recruits IKK complex"/>
</dbReference>
<dbReference type="Reactome" id="R-HSA-937041">
    <property type="pathway name" value="IKK complex recruitment mediated by RIP1"/>
</dbReference>
<dbReference type="Reactome" id="R-HSA-9705671">
    <property type="pathway name" value="SARS-CoV-2 activates/modulates innate and adaptive immune responses"/>
</dbReference>
<dbReference type="Reactome" id="R-HSA-975144">
    <property type="pathway name" value="IRAK1 recruits IKK complex upon TLR7/8 or 9 stimulation"/>
</dbReference>
<dbReference type="Reactome" id="R-HSA-9758274">
    <property type="pathway name" value="Regulation of NF-kappa B signaling"/>
</dbReference>
<dbReference type="Reactome" id="R-HSA-9833482">
    <property type="pathway name" value="PKR-mediated signaling"/>
</dbReference>
<dbReference type="Reactome" id="R-HSA-9860276">
    <property type="pathway name" value="SLC15A4:TASL-dependent IRF5 activation"/>
</dbReference>
<dbReference type="Reactome" id="R-HSA-9860927">
    <property type="pathway name" value="Turbulent (oscillatory, disturbed) flow shear stress activates signaling by PIEZO1 and integrins in endothelial cells"/>
</dbReference>
<dbReference type="Reactome" id="R-HSA-9909505">
    <property type="pathway name" value="Modulation of host responses by IFN-stimulated genes"/>
</dbReference>
<dbReference type="SABIO-RK" id="Q9Y6K9"/>
<dbReference type="SignaLink" id="Q9Y6K9"/>
<dbReference type="SIGNOR" id="Q9Y6K9"/>
<dbReference type="BioGRID-ORCS" id="8517">
    <property type="hits" value="75 hits in 782 CRISPR screens"/>
</dbReference>
<dbReference type="CD-CODE" id="8C2F96ED">
    <property type="entry name" value="Centrosome"/>
</dbReference>
<dbReference type="ChiTaRS" id="IKBKG">
    <property type="organism name" value="human"/>
</dbReference>
<dbReference type="EvolutionaryTrace" id="Q9Y6K9"/>
<dbReference type="GeneWiki" id="IKBKG"/>
<dbReference type="GenomeRNAi" id="8517"/>
<dbReference type="Pharos" id="Q9Y6K9">
    <property type="development level" value="Tbio"/>
</dbReference>
<dbReference type="PRO" id="PR:Q9Y6K9"/>
<dbReference type="Proteomes" id="UP000005640">
    <property type="component" value="Chromosome X"/>
</dbReference>
<dbReference type="RNAct" id="Q9Y6K9">
    <property type="molecule type" value="protein"/>
</dbReference>
<dbReference type="Bgee" id="ENSG00000269335">
    <property type="expression patterns" value="Expressed in granulocyte and 95 other cell types or tissues"/>
</dbReference>
<dbReference type="ExpressionAtlas" id="Q9Y6K9">
    <property type="expression patterns" value="baseline and differential"/>
</dbReference>
<dbReference type="GO" id="GO:0005737">
    <property type="term" value="C:cytoplasm"/>
    <property type="evidence" value="ECO:0000314"/>
    <property type="project" value="UniProtKB"/>
</dbReference>
<dbReference type="GO" id="GO:0005829">
    <property type="term" value="C:cytosol"/>
    <property type="evidence" value="ECO:0000314"/>
    <property type="project" value="HPA"/>
</dbReference>
<dbReference type="GO" id="GO:0008385">
    <property type="term" value="C:IkappaB kinase complex"/>
    <property type="evidence" value="ECO:0000314"/>
    <property type="project" value="MGI"/>
</dbReference>
<dbReference type="GO" id="GO:0072686">
    <property type="term" value="C:mitotic spindle"/>
    <property type="evidence" value="ECO:0000314"/>
    <property type="project" value="UniProtKB"/>
</dbReference>
<dbReference type="GO" id="GO:0005654">
    <property type="term" value="C:nucleoplasm"/>
    <property type="evidence" value="ECO:0000304"/>
    <property type="project" value="Reactome"/>
</dbReference>
<dbReference type="GO" id="GO:0005634">
    <property type="term" value="C:nucleus"/>
    <property type="evidence" value="ECO:0000314"/>
    <property type="project" value="UniProtKB"/>
</dbReference>
<dbReference type="GO" id="GO:0032991">
    <property type="term" value="C:protein-containing complex"/>
    <property type="evidence" value="ECO:0000314"/>
    <property type="project" value="UniProtKB"/>
</dbReference>
<dbReference type="GO" id="GO:0000922">
    <property type="term" value="C:spindle pole"/>
    <property type="evidence" value="ECO:0000314"/>
    <property type="project" value="UniProtKB"/>
</dbReference>
<dbReference type="GO" id="GO:0000151">
    <property type="term" value="C:ubiquitin ligase complex"/>
    <property type="evidence" value="ECO:0000353"/>
    <property type="project" value="ParkinsonsUK-UCL"/>
</dbReference>
<dbReference type="GO" id="GO:0042802">
    <property type="term" value="F:identical protein binding"/>
    <property type="evidence" value="ECO:0000353"/>
    <property type="project" value="IntAct"/>
</dbReference>
<dbReference type="GO" id="GO:0070530">
    <property type="term" value="F:K63-linked polyubiquitin modification-dependent protein binding"/>
    <property type="evidence" value="ECO:0000314"/>
    <property type="project" value="UniProtKB"/>
</dbReference>
<dbReference type="GO" id="GO:1990450">
    <property type="term" value="F:linear polyubiquitin binding"/>
    <property type="evidence" value="ECO:0000314"/>
    <property type="project" value="UniProtKB"/>
</dbReference>
<dbReference type="GO" id="GO:0031593">
    <property type="term" value="F:polyubiquitin modification-dependent protein binding"/>
    <property type="evidence" value="ECO:0000314"/>
    <property type="project" value="UniProt"/>
</dbReference>
<dbReference type="GO" id="GO:0019904">
    <property type="term" value="F:protein domain specific binding"/>
    <property type="evidence" value="ECO:0000353"/>
    <property type="project" value="UniProtKB"/>
</dbReference>
<dbReference type="GO" id="GO:0046982">
    <property type="term" value="F:protein heterodimerization activity"/>
    <property type="evidence" value="ECO:0000314"/>
    <property type="project" value="UniProtKB"/>
</dbReference>
<dbReference type="GO" id="GO:0042803">
    <property type="term" value="F:protein homodimerization activity"/>
    <property type="evidence" value="ECO:0000314"/>
    <property type="project" value="UniProtKB"/>
</dbReference>
<dbReference type="GO" id="GO:0035591">
    <property type="term" value="F:signaling adaptor activity"/>
    <property type="evidence" value="ECO:0000314"/>
    <property type="project" value="UniProt"/>
</dbReference>
<dbReference type="GO" id="GO:1990459">
    <property type="term" value="F:transferrin receptor binding"/>
    <property type="evidence" value="ECO:0000353"/>
    <property type="project" value="ARUK-UCL"/>
</dbReference>
<dbReference type="GO" id="GO:0031625">
    <property type="term" value="F:ubiquitin protein ligase binding"/>
    <property type="evidence" value="ECO:0000353"/>
    <property type="project" value="ParkinsonsUK-UCL"/>
</dbReference>
<dbReference type="GO" id="GO:0008270">
    <property type="term" value="F:zinc ion binding"/>
    <property type="evidence" value="ECO:0007669"/>
    <property type="project" value="UniProtKB-KW"/>
</dbReference>
<dbReference type="GO" id="GO:0043276">
    <property type="term" value="P:anoikis"/>
    <property type="evidence" value="ECO:0000250"/>
    <property type="project" value="BHF-UCL"/>
</dbReference>
<dbReference type="GO" id="GO:0006915">
    <property type="term" value="P:apoptotic process"/>
    <property type="evidence" value="ECO:0000304"/>
    <property type="project" value="ProtInc"/>
</dbReference>
<dbReference type="GO" id="GO:0001782">
    <property type="term" value="P:B cell homeostasis"/>
    <property type="evidence" value="ECO:0007669"/>
    <property type="project" value="Ensembl"/>
</dbReference>
<dbReference type="GO" id="GO:0007249">
    <property type="term" value="P:canonical NF-kappaB signal transduction"/>
    <property type="evidence" value="ECO:0000314"/>
    <property type="project" value="ComplexPortal"/>
</dbReference>
<dbReference type="GO" id="GO:0042742">
    <property type="term" value="P:defense response to bacterium"/>
    <property type="evidence" value="ECO:0000314"/>
    <property type="project" value="UniProt"/>
</dbReference>
<dbReference type="GO" id="GO:0006974">
    <property type="term" value="P:DNA damage response"/>
    <property type="evidence" value="ECO:0000314"/>
    <property type="project" value="UniProtKB"/>
</dbReference>
<dbReference type="GO" id="GO:0051650">
    <property type="term" value="P:establishment of vesicle localization"/>
    <property type="evidence" value="ECO:0000315"/>
    <property type="project" value="UniProtKB"/>
</dbReference>
<dbReference type="GO" id="GO:0006955">
    <property type="term" value="P:immune response"/>
    <property type="evidence" value="ECO:0000304"/>
    <property type="project" value="ProtInc"/>
</dbReference>
<dbReference type="GO" id="GO:0006954">
    <property type="term" value="P:inflammatory response"/>
    <property type="evidence" value="ECO:0000304"/>
    <property type="project" value="UniProtKB"/>
</dbReference>
<dbReference type="GO" id="GO:0045087">
    <property type="term" value="P:innate immune response"/>
    <property type="evidence" value="ECO:0000304"/>
    <property type="project" value="UniProtKB"/>
</dbReference>
<dbReference type="GO" id="GO:1902236">
    <property type="term" value="P:negative regulation of endoplasmic reticulum stress-induced intrinsic apoptotic signaling pathway"/>
    <property type="evidence" value="ECO:0007669"/>
    <property type="project" value="Ensembl"/>
</dbReference>
<dbReference type="GO" id="GO:0043123">
    <property type="term" value="P:positive regulation of canonical NF-kappaB signal transduction"/>
    <property type="evidence" value="ECO:0000314"/>
    <property type="project" value="UniProtKB"/>
</dbReference>
<dbReference type="GO" id="GO:0010628">
    <property type="term" value="P:positive regulation of gene expression"/>
    <property type="evidence" value="ECO:0007669"/>
    <property type="project" value="Ensembl"/>
</dbReference>
<dbReference type="GO" id="GO:0016239">
    <property type="term" value="P:positive regulation of macroautophagy"/>
    <property type="evidence" value="ECO:0000250"/>
    <property type="project" value="BHF-UCL"/>
</dbReference>
<dbReference type="GO" id="GO:0051092">
    <property type="term" value="P:positive regulation of NF-kappaB transcription factor activity"/>
    <property type="evidence" value="ECO:0000314"/>
    <property type="project" value="UniProtKB"/>
</dbReference>
<dbReference type="GO" id="GO:0050862">
    <property type="term" value="P:positive regulation of T cell receptor signaling pathway"/>
    <property type="evidence" value="ECO:0000314"/>
    <property type="project" value="UniProtKB"/>
</dbReference>
<dbReference type="GO" id="GO:0045944">
    <property type="term" value="P:positive regulation of transcription by RNA polymerase II"/>
    <property type="evidence" value="ECO:0000314"/>
    <property type="project" value="UniProtKB"/>
</dbReference>
<dbReference type="GO" id="GO:2000060">
    <property type="term" value="P:positive regulation of ubiquitin-dependent protein catabolic process"/>
    <property type="evidence" value="ECO:0000304"/>
    <property type="project" value="UniProt"/>
</dbReference>
<dbReference type="GO" id="GO:0065003">
    <property type="term" value="P:protein-containing complex assembly"/>
    <property type="evidence" value="ECO:0000314"/>
    <property type="project" value="UniProtKB"/>
</dbReference>
<dbReference type="GO" id="GO:0009615">
    <property type="term" value="P:response to virus"/>
    <property type="evidence" value="ECO:0000304"/>
    <property type="project" value="UniProtKB"/>
</dbReference>
<dbReference type="GO" id="GO:0050852">
    <property type="term" value="P:T cell receptor signaling pathway"/>
    <property type="evidence" value="ECO:0000303"/>
    <property type="project" value="UniProtKB"/>
</dbReference>
<dbReference type="DisProt" id="DP02269"/>
<dbReference type="FunFam" id="1.20.5.390:FF:000002">
    <property type="entry name" value="NF-kappa-B essential modulator isoform X1"/>
    <property type="match status" value="1"/>
</dbReference>
<dbReference type="FunFam" id="1.20.5.390:FF:000003">
    <property type="entry name" value="NF-kappa-B essential modulator isoform X1"/>
    <property type="match status" value="1"/>
</dbReference>
<dbReference type="FunFam" id="1.20.5.990:FF:000003">
    <property type="entry name" value="NF-kappa-B essential modulator isoform X1"/>
    <property type="match status" value="1"/>
</dbReference>
<dbReference type="Gene3D" id="1.20.5.390">
    <property type="entry name" value="L1 transposable element, trimerization domain"/>
    <property type="match status" value="2"/>
</dbReference>
<dbReference type="Gene3D" id="1.20.5.990">
    <property type="entry name" value="Nemo cc2-lz domain - 1d5 darpin complex"/>
    <property type="match status" value="1"/>
</dbReference>
<dbReference type="IDEAL" id="IID00745"/>
<dbReference type="InterPro" id="IPR032419">
    <property type="entry name" value="CC2-LZ_dom"/>
</dbReference>
<dbReference type="InterPro" id="IPR021063">
    <property type="entry name" value="NEMO_N"/>
</dbReference>
<dbReference type="InterPro" id="IPR034735">
    <property type="entry name" value="NEMO_ZF"/>
</dbReference>
<dbReference type="InterPro" id="IPR051301">
    <property type="entry name" value="Optineurin/NFkB_EssMod"/>
</dbReference>
<dbReference type="PANTHER" id="PTHR31553">
    <property type="entry name" value="NF-KAPPA-B ESSENTIAL MODULATOR"/>
    <property type="match status" value="1"/>
</dbReference>
<dbReference type="PANTHER" id="PTHR31553:SF3">
    <property type="entry name" value="NF-KAPPA-B ESSENTIAL MODULATOR"/>
    <property type="match status" value="1"/>
</dbReference>
<dbReference type="Pfam" id="PF16516">
    <property type="entry name" value="CC2-LZ"/>
    <property type="match status" value="1"/>
</dbReference>
<dbReference type="Pfam" id="PF11577">
    <property type="entry name" value="NEMO"/>
    <property type="match status" value="1"/>
</dbReference>
<dbReference type="Pfam" id="PF18414">
    <property type="entry name" value="zf_C2H2_10"/>
    <property type="match status" value="1"/>
</dbReference>
<dbReference type="PROSITE" id="PS51801">
    <property type="entry name" value="ZF_CCHC_NOA"/>
    <property type="match status" value="1"/>
</dbReference>
<reference key="1">
    <citation type="journal article" date="1999" name="Proc. Natl. Acad. Sci. U.S.A.">
        <title>Identification of a cell protein (FIP-3) as a modulator of NF-kappaB activity and as a target of an adenovirus inhibitor of tumor necrosis factor alpha-induced apoptosis.</title>
        <authorList>
            <person name="Li Y."/>
            <person name="Kang J."/>
            <person name="Friedman J."/>
            <person name="Tarassishin L."/>
            <person name="Ye J."/>
            <person name="Kovalenko A."/>
            <person name="Wallach D."/>
            <person name="Horwitz M.S."/>
        </authorList>
    </citation>
    <scope>NUCLEOTIDE SEQUENCE [MRNA] (ISOFORM 1)</scope>
</reference>
<reference key="2">
    <citation type="journal article" date="1999" name="J. Biomed. Sci.">
        <title>Isolation of full-length cDNA and chromosomal localization of human NF-kappaB modulator NEMO to Xq28.</title>
        <authorList>
            <person name="Jin D.-Y."/>
            <person name="Jeang K.-T."/>
        </authorList>
    </citation>
    <scope>NUCLEOTIDE SEQUENCE [MRNA] (ISOFORM 1)</scope>
    <source>
        <tissue>Mammary cancer</tissue>
    </source>
</reference>
<reference key="3">
    <citation type="journal article" date="1998" name="Nature">
        <title>IKK-gamma is an essential regulatory subunit of the IkappaB kinase complex.</title>
        <authorList>
            <person name="Rothwarf D.M."/>
            <person name="Zandi E."/>
            <person name="Natoli G."/>
            <person name="Karin M."/>
        </authorList>
    </citation>
    <scope>NUCLEOTIDE SEQUENCE [MRNA] (ISOFORM 1)</scope>
    <scope>PARTIAL PROTEIN SEQUENCE</scope>
    <scope>SUBUNIT</scope>
    <scope>FUNCTION</scope>
    <source>
        <tissue>Cervix carcinoma</tissue>
    </source>
</reference>
<reference key="4">
    <citation type="journal article" date="2000" name="Nature">
        <title>Genomic rearrangement in NEMO impairs NF-kappaB activation and is a cause of incontinentia pigmenti.</title>
        <authorList>
            <person name="Smahi A."/>
            <person name="Courtois G."/>
            <person name="Vabres P."/>
            <person name="Yamaoka S."/>
            <person name="Heuertz S."/>
            <person name="Munnich A."/>
            <person name="Israel A."/>
            <person name="Heiss N.S."/>
            <person name="Klauck S.M."/>
            <person name="Kioschis P."/>
            <person name="Wiemann S."/>
            <person name="Poustka A."/>
            <person name="Esposito T."/>
            <person name="Bardaro T."/>
            <person name="Gianfrancesco F."/>
            <person name="Ciccodicola A."/>
            <person name="D'Urso M."/>
            <person name="Woffendin H."/>
            <person name="Jakins T."/>
            <person name="Donnai D."/>
            <person name="Stewart H."/>
            <person name="Kenwrick S.J."/>
            <person name="Aradhya S."/>
            <person name="Yamagata T."/>
            <person name="Levy M."/>
            <person name="Lewis R.A."/>
            <person name="Nelson D.L."/>
        </authorList>
    </citation>
    <scope>NUCLEOTIDE SEQUENCE [GENOMIC DNA]</scope>
    <scope>VARIANT IP VAL-407</scope>
</reference>
<reference key="5">
    <citation type="journal article" date="2000" name="Biochem. Biophys. Res. Commun.">
        <title>cDNA cloning by amplification of circularized first strand cDNAs reveals non-IRE-regulated iron-responsive mRNAs.</title>
        <authorList>
            <person name="Ye Z."/>
            <person name="Connor J.R."/>
        </authorList>
    </citation>
    <scope>NUCLEOTIDE SEQUENCE [MRNA] (ISOFORM 1)</scope>
    <source>
        <tissue>Astrocytoma</tissue>
    </source>
</reference>
<reference key="6">
    <citation type="submission" date="2002-05" db="EMBL/GenBank/DDBJ databases">
        <title>Ikbkg gene modulates the herpes virus susceptibility in mice.</title>
        <authorList>
            <person name="Perelygin A.A."/>
            <person name="Perelygina L.M."/>
        </authorList>
    </citation>
    <scope>NUCLEOTIDE SEQUENCE [MRNA] (ISOFORM 2)</scope>
</reference>
<reference key="7">
    <citation type="journal article" date="2004" name="Nat. Genet.">
        <title>Complete sequencing and characterization of 21,243 full-length human cDNAs.</title>
        <authorList>
            <person name="Ota T."/>
            <person name="Suzuki Y."/>
            <person name="Nishikawa T."/>
            <person name="Otsuki T."/>
            <person name="Sugiyama T."/>
            <person name="Irie R."/>
            <person name="Wakamatsu A."/>
            <person name="Hayashi K."/>
            <person name="Sato H."/>
            <person name="Nagai K."/>
            <person name="Kimura K."/>
            <person name="Makita H."/>
            <person name="Sekine M."/>
            <person name="Obayashi M."/>
            <person name="Nishi T."/>
            <person name="Shibahara T."/>
            <person name="Tanaka T."/>
            <person name="Ishii S."/>
            <person name="Yamamoto J."/>
            <person name="Saito K."/>
            <person name="Kawai Y."/>
            <person name="Isono Y."/>
            <person name="Nakamura Y."/>
            <person name="Nagahari K."/>
            <person name="Murakami K."/>
            <person name="Yasuda T."/>
            <person name="Iwayanagi T."/>
            <person name="Wagatsuma M."/>
            <person name="Shiratori A."/>
            <person name="Sudo H."/>
            <person name="Hosoiri T."/>
            <person name="Kaku Y."/>
            <person name="Kodaira H."/>
            <person name="Kondo H."/>
            <person name="Sugawara M."/>
            <person name="Takahashi M."/>
            <person name="Kanda K."/>
            <person name="Yokoi T."/>
            <person name="Furuya T."/>
            <person name="Kikkawa E."/>
            <person name="Omura Y."/>
            <person name="Abe K."/>
            <person name="Kamihara K."/>
            <person name="Katsuta N."/>
            <person name="Sato K."/>
            <person name="Tanikawa M."/>
            <person name="Yamazaki M."/>
            <person name="Ninomiya K."/>
            <person name="Ishibashi T."/>
            <person name="Yamashita H."/>
            <person name="Murakawa K."/>
            <person name="Fujimori K."/>
            <person name="Tanai H."/>
            <person name="Kimata M."/>
            <person name="Watanabe M."/>
            <person name="Hiraoka S."/>
            <person name="Chiba Y."/>
            <person name="Ishida S."/>
            <person name="Ono Y."/>
            <person name="Takiguchi S."/>
            <person name="Watanabe S."/>
            <person name="Yosida M."/>
            <person name="Hotuta T."/>
            <person name="Kusano J."/>
            <person name="Kanehori K."/>
            <person name="Takahashi-Fujii A."/>
            <person name="Hara H."/>
            <person name="Tanase T.-O."/>
            <person name="Nomura Y."/>
            <person name="Togiya S."/>
            <person name="Komai F."/>
            <person name="Hara R."/>
            <person name="Takeuchi K."/>
            <person name="Arita M."/>
            <person name="Imose N."/>
            <person name="Musashino K."/>
            <person name="Yuuki H."/>
            <person name="Oshima A."/>
            <person name="Sasaki N."/>
            <person name="Aotsuka S."/>
            <person name="Yoshikawa Y."/>
            <person name="Matsunawa H."/>
            <person name="Ichihara T."/>
            <person name="Shiohata N."/>
            <person name="Sano S."/>
            <person name="Moriya S."/>
            <person name="Momiyama H."/>
            <person name="Satoh N."/>
            <person name="Takami S."/>
            <person name="Terashima Y."/>
            <person name="Suzuki O."/>
            <person name="Nakagawa S."/>
            <person name="Senoh A."/>
            <person name="Mizoguchi H."/>
            <person name="Goto Y."/>
            <person name="Shimizu F."/>
            <person name="Wakebe H."/>
            <person name="Hishigaki H."/>
            <person name="Watanabe T."/>
            <person name="Sugiyama A."/>
            <person name="Takemoto M."/>
            <person name="Kawakami B."/>
            <person name="Yamazaki M."/>
            <person name="Watanabe K."/>
            <person name="Kumagai A."/>
            <person name="Itakura S."/>
            <person name="Fukuzumi Y."/>
            <person name="Fujimori Y."/>
            <person name="Komiyama M."/>
            <person name="Tashiro H."/>
            <person name="Tanigami A."/>
            <person name="Fujiwara T."/>
            <person name="Ono T."/>
            <person name="Yamada K."/>
            <person name="Fujii Y."/>
            <person name="Ozaki K."/>
            <person name="Hirao M."/>
            <person name="Ohmori Y."/>
            <person name="Kawabata A."/>
            <person name="Hikiji T."/>
            <person name="Kobatake N."/>
            <person name="Inagaki H."/>
            <person name="Ikema Y."/>
            <person name="Okamoto S."/>
            <person name="Okitani R."/>
            <person name="Kawakami T."/>
            <person name="Noguchi S."/>
            <person name="Itoh T."/>
            <person name="Shigeta K."/>
            <person name="Senba T."/>
            <person name="Matsumura K."/>
            <person name="Nakajima Y."/>
            <person name="Mizuno T."/>
            <person name="Morinaga M."/>
            <person name="Sasaki M."/>
            <person name="Togashi T."/>
            <person name="Oyama M."/>
            <person name="Hata H."/>
            <person name="Watanabe M."/>
            <person name="Komatsu T."/>
            <person name="Mizushima-Sugano J."/>
            <person name="Satoh T."/>
            <person name="Shirai Y."/>
            <person name="Takahashi Y."/>
            <person name="Nakagawa K."/>
            <person name="Okumura K."/>
            <person name="Nagase T."/>
            <person name="Nomura N."/>
            <person name="Kikuchi H."/>
            <person name="Masuho Y."/>
            <person name="Yamashita R."/>
            <person name="Nakai K."/>
            <person name="Yada T."/>
            <person name="Nakamura Y."/>
            <person name="Ohara O."/>
            <person name="Isogai T."/>
            <person name="Sugano S."/>
        </authorList>
    </citation>
    <scope>NUCLEOTIDE SEQUENCE [LARGE SCALE MRNA] (ISOFORM 3)</scope>
</reference>
<reference key="8">
    <citation type="submission" date="2004-10" db="EMBL/GenBank/DDBJ databases">
        <title>Cloning of human full-length CDSs in BD Creator(TM) system donor vector.</title>
        <authorList>
            <person name="Kalnine N."/>
            <person name="Chen X."/>
            <person name="Rolfs A."/>
            <person name="Halleck A."/>
            <person name="Hines L."/>
            <person name="Eisenstein S."/>
            <person name="Koundinya M."/>
            <person name="Raphael J."/>
            <person name="Moreira D."/>
            <person name="Kelley T."/>
            <person name="LaBaer J."/>
            <person name="Lin Y."/>
            <person name="Phelan M."/>
            <person name="Farmer A."/>
        </authorList>
    </citation>
    <scope>NUCLEOTIDE SEQUENCE [LARGE SCALE MRNA] (ISOFORM 1)</scope>
</reference>
<reference key="9">
    <citation type="journal article" date="2005" name="Nature">
        <title>The DNA sequence of the human X chromosome.</title>
        <authorList>
            <person name="Ross M.T."/>
            <person name="Grafham D.V."/>
            <person name="Coffey A.J."/>
            <person name="Scherer S."/>
            <person name="McLay K."/>
            <person name="Muzny D."/>
            <person name="Platzer M."/>
            <person name="Howell G.R."/>
            <person name="Burrows C."/>
            <person name="Bird C.P."/>
            <person name="Frankish A."/>
            <person name="Lovell F.L."/>
            <person name="Howe K.L."/>
            <person name="Ashurst J.L."/>
            <person name="Fulton R.S."/>
            <person name="Sudbrak R."/>
            <person name="Wen G."/>
            <person name="Jones M.C."/>
            <person name="Hurles M.E."/>
            <person name="Andrews T.D."/>
            <person name="Scott C.E."/>
            <person name="Searle S."/>
            <person name="Ramser J."/>
            <person name="Whittaker A."/>
            <person name="Deadman R."/>
            <person name="Carter N.P."/>
            <person name="Hunt S.E."/>
            <person name="Chen R."/>
            <person name="Cree A."/>
            <person name="Gunaratne P."/>
            <person name="Havlak P."/>
            <person name="Hodgson A."/>
            <person name="Metzker M.L."/>
            <person name="Richards S."/>
            <person name="Scott G."/>
            <person name="Steffen D."/>
            <person name="Sodergren E."/>
            <person name="Wheeler D.A."/>
            <person name="Worley K.C."/>
            <person name="Ainscough R."/>
            <person name="Ambrose K.D."/>
            <person name="Ansari-Lari M.A."/>
            <person name="Aradhya S."/>
            <person name="Ashwell R.I."/>
            <person name="Babbage A.K."/>
            <person name="Bagguley C.L."/>
            <person name="Ballabio A."/>
            <person name="Banerjee R."/>
            <person name="Barker G.E."/>
            <person name="Barlow K.F."/>
            <person name="Barrett I.P."/>
            <person name="Bates K.N."/>
            <person name="Beare D.M."/>
            <person name="Beasley H."/>
            <person name="Beasley O."/>
            <person name="Beck A."/>
            <person name="Bethel G."/>
            <person name="Blechschmidt K."/>
            <person name="Brady N."/>
            <person name="Bray-Allen S."/>
            <person name="Bridgeman A.M."/>
            <person name="Brown A.J."/>
            <person name="Brown M.J."/>
            <person name="Bonnin D."/>
            <person name="Bruford E.A."/>
            <person name="Buhay C."/>
            <person name="Burch P."/>
            <person name="Burford D."/>
            <person name="Burgess J."/>
            <person name="Burrill W."/>
            <person name="Burton J."/>
            <person name="Bye J.M."/>
            <person name="Carder C."/>
            <person name="Carrel L."/>
            <person name="Chako J."/>
            <person name="Chapman J.C."/>
            <person name="Chavez D."/>
            <person name="Chen E."/>
            <person name="Chen G."/>
            <person name="Chen Y."/>
            <person name="Chen Z."/>
            <person name="Chinault C."/>
            <person name="Ciccodicola A."/>
            <person name="Clark S.Y."/>
            <person name="Clarke G."/>
            <person name="Clee C.M."/>
            <person name="Clegg S."/>
            <person name="Clerc-Blankenburg K."/>
            <person name="Clifford K."/>
            <person name="Cobley V."/>
            <person name="Cole C.G."/>
            <person name="Conquer J.S."/>
            <person name="Corby N."/>
            <person name="Connor R.E."/>
            <person name="David R."/>
            <person name="Davies J."/>
            <person name="Davis C."/>
            <person name="Davis J."/>
            <person name="Delgado O."/>
            <person name="Deshazo D."/>
            <person name="Dhami P."/>
            <person name="Ding Y."/>
            <person name="Dinh H."/>
            <person name="Dodsworth S."/>
            <person name="Draper H."/>
            <person name="Dugan-Rocha S."/>
            <person name="Dunham A."/>
            <person name="Dunn M."/>
            <person name="Durbin K.J."/>
            <person name="Dutta I."/>
            <person name="Eades T."/>
            <person name="Ellwood M."/>
            <person name="Emery-Cohen A."/>
            <person name="Errington H."/>
            <person name="Evans K.L."/>
            <person name="Faulkner L."/>
            <person name="Francis F."/>
            <person name="Frankland J."/>
            <person name="Fraser A.E."/>
            <person name="Galgoczy P."/>
            <person name="Gilbert J."/>
            <person name="Gill R."/>
            <person name="Gloeckner G."/>
            <person name="Gregory S.G."/>
            <person name="Gribble S."/>
            <person name="Griffiths C."/>
            <person name="Grocock R."/>
            <person name="Gu Y."/>
            <person name="Gwilliam R."/>
            <person name="Hamilton C."/>
            <person name="Hart E.A."/>
            <person name="Hawes A."/>
            <person name="Heath P.D."/>
            <person name="Heitmann K."/>
            <person name="Hennig S."/>
            <person name="Hernandez J."/>
            <person name="Hinzmann B."/>
            <person name="Ho S."/>
            <person name="Hoffs M."/>
            <person name="Howden P.J."/>
            <person name="Huckle E.J."/>
            <person name="Hume J."/>
            <person name="Hunt P.J."/>
            <person name="Hunt A.R."/>
            <person name="Isherwood J."/>
            <person name="Jacob L."/>
            <person name="Johnson D."/>
            <person name="Jones S."/>
            <person name="de Jong P.J."/>
            <person name="Joseph S.S."/>
            <person name="Keenan S."/>
            <person name="Kelly S."/>
            <person name="Kershaw J.K."/>
            <person name="Khan Z."/>
            <person name="Kioschis P."/>
            <person name="Klages S."/>
            <person name="Knights A.J."/>
            <person name="Kosiura A."/>
            <person name="Kovar-Smith C."/>
            <person name="Laird G.K."/>
            <person name="Langford C."/>
            <person name="Lawlor S."/>
            <person name="Leversha M."/>
            <person name="Lewis L."/>
            <person name="Liu W."/>
            <person name="Lloyd C."/>
            <person name="Lloyd D.M."/>
            <person name="Loulseged H."/>
            <person name="Loveland J.E."/>
            <person name="Lovell J.D."/>
            <person name="Lozado R."/>
            <person name="Lu J."/>
            <person name="Lyne R."/>
            <person name="Ma J."/>
            <person name="Maheshwari M."/>
            <person name="Matthews L.H."/>
            <person name="McDowall J."/>
            <person name="McLaren S."/>
            <person name="McMurray A."/>
            <person name="Meidl P."/>
            <person name="Meitinger T."/>
            <person name="Milne S."/>
            <person name="Miner G."/>
            <person name="Mistry S.L."/>
            <person name="Morgan M."/>
            <person name="Morris S."/>
            <person name="Mueller I."/>
            <person name="Mullikin J.C."/>
            <person name="Nguyen N."/>
            <person name="Nordsiek G."/>
            <person name="Nyakatura G."/>
            <person name="O'dell C.N."/>
            <person name="Okwuonu G."/>
            <person name="Palmer S."/>
            <person name="Pandian R."/>
            <person name="Parker D."/>
            <person name="Parrish J."/>
            <person name="Pasternak S."/>
            <person name="Patel D."/>
            <person name="Pearce A.V."/>
            <person name="Pearson D.M."/>
            <person name="Pelan S.E."/>
            <person name="Perez L."/>
            <person name="Porter K.M."/>
            <person name="Ramsey Y."/>
            <person name="Reichwald K."/>
            <person name="Rhodes S."/>
            <person name="Ridler K.A."/>
            <person name="Schlessinger D."/>
            <person name="Schueler M.G."/>
            <person name="Sehra H.K."/>
            <person name="Shaw-Smith C."/>
            <person name="Shen H."/>
            <person name="Sheridan E.M."/>
            <person name="Shownkeen R."/>
            <person name="Skuce C.D."/>
            <person name="Smith M.L."/>
            <person name="Sotheran E.C."/>
            <person name="Steingruber H.E."/>
            <person name="Steward C.A."/>
            <person name="Storey R."/>
            <person name="Swann R.M."/>
            <person name="Swarbreck D."/>
            <person name="Tabor P.E."/>
            <person name="Taudien S."/>
            <person name="Taylor T."/>
            <person name="Teague B."/>
            <person name="Thomas K."/>
            <person name="Thorpe A."/>
            <person name="Timms K."/>
            <person name="Tracey A."/>
            <person name="Trevanion S."/>
            <person name="Tromans A.C."/>
            <person name="d'Urso M."/>
            <person name="Verduzco D."/>
            <person name="Villasana D."/>
            <person name="Waldron L."/>
            <person name="Wall M."/>
            <person name="Wang Q."/>
            <person name="Warren J."/>
            <person name="Warry G.L."/>
            <person name="Wei X."/>
            <person name="West A."/>
            <person name="Whitehead S.L."/>
            <person name="Whiteley M.N."/>
            <person name="Wilkinson J.E."/>
            <person name="Willey D.L."/>
            <person name="Williams G."/>
            <person name="Williams L."/>
            <person name="Williamson A."/>
            <person name="Williamson H."/>
            <person name="Wilming L."/>
            <person name="Woodmansey R.L."/>
            <person name="Wray P.W."/>
            <person name="Yen J."/>
            <person name="Zhang J."/>
            <person name="Zhou J."/>
            <person name="Zoghbi H."/>
            <person name="Zorilla S."/>
            <person name="Buck D."/>
            <person name="Reinhardt R."/>
            <person name="Poustka A."/>
            <person name="Rosenthal A."/>
            <person name="Lehrach H."/>
            <person name="Meindl A."/>
            <person name="Minx P.J."/>
            <person name="Hillier L.W."/>
            <person name="Willard H.F."/>
            <person name="Wilson R.K."/>
            <person name="Waterston R.H."/>
            <person name="Rice C.M."/>
            <person name="Vaudin M."/>
            <person name="Coulson A."/>
            <person name="Nelson D.L."/>
            <person name="Weinstock G."/>
            <person name="Sulston J.E."/>
            <person name="Durbin R.M."/>
            <person name="Hubbard T."/>
            <person name="Gibbs R.A."/>
            <person name="Beck S."/>
            <person name="Rogers J."/>
            <person name="Bentley D.R."/>
        </authorList>
    </citation>
    <scope>NUCLEOTIDE SEQUENCE [LARGE SCALE GENOMIC DNA]</scope>
</reference>
<reference key="10">
    <citation type="journal article" date="2004" name="Genome Res.">
        <title>The status, quality, and expansion of the NIH full-length cDNA project: the Mammalian Gene Collection (MGC).</title>
        <authorList>
            <consortium name="The MGC Project Team"/>
        </authorList>
    </citation>
    <scope>NUCLEOTIDE SEQUENCE [LARGE SCALE MRNA] (ISOFORM 1)</scope>
    <source>
        <tissue>Lung</tissue>
        <tissue>Placenta</tissue>
        <tissue>Skin</tissue>
    </source>
</reference>
<reference key="11">
    <citation type="journal article" date="1999" name="Mol. Cell. Biol.">
        <title>IkappaB kinase (IKK)-associated protein 1, a common component of the heterogeneous IKK complex.</title>
        <authorList>
            <person name="Mercurio F."/>
            <person name="Murray B.W."/>
            <person name="Shevchenko A."/>
            <person name="Bennett B.L."/>
            <person name="Young D.B."/>
            <person name="Li J.W."/>
            <person name="Pascual G."/>
            <person name="Motiwala A."/>
            <person name="Zhu H."/>
            <person name="Mann M."/>
            <person name="Manning A.M."/>
        </authorList>
    </citation>
    <scope>NUCLEOTIDE SEQUENCE [MRNA] OF 51-419 (ISOFORM 1)</scope>
    <scope>PROTEIN SEQUENCE OF 144-159</scope>
    <scope>SUBUNIT</scope>
    <source>
        <tissue>Cervix carcinoma</tissue>
    </source>
</reference>
<reference key="12">
    <citation type="journal article" date="1999" name="J. Biol. Chem.">
        <title>Role of adapter function in oncoprotein-mediated activation of NF-kappaB: human T-cell leukemia virus type I Tax interacts directly with IkappaB kinase gamma.</title>
        <authorList>
            <person name="Jin D.-Y."/>
            <person name="Giordano V."/>
            <person name="Kibler K.V."/>
            <person name="Nakano H."/>
            <person name="Jeang K.-T."/>
        </authorList>
    </citation>
    <scope>INTERACTION WITH HTLV-1 TAX-1 (MICROBIAL INFECTION)</scope>
    <scope>FUNCTION (MICROBIAL INFECTION)</scope>
</reference>
<reference key="13">
    <citation type="journal article" date="2000" name="Oncogene">
        <title>Activation of IKKalpha and IKKbeta through their fusion with HTLV-I tax protein.</title>
        <authorList>
            <person name="Xiao G."/>
            <person name="Sun S.C."/>
        </authorList>
    </citation>
    <scope>INTERACTION WITH HTLV-1 TAX-1 (MICROBIAL INFECTION)</scope>
    <scope>FUNCTION (MICROBIAL INFECTION)</scope>
</reference>
<reference key="14">
    <citation type="journal article" date="2001" name="FEBS Lett.">
        <title>Functional redundancy of the zinc fingers of A20 for inhibition of NF-kappaB activation and protein-protein interactions.</title>
        <authorList>
            <person name="Klinkenberg M."/>
            <person name="Van Huffel S."/>
            <person name="Heyninck K."/>
            <person name="Beyaert R."/>
        </authorList>
    </citation>
    <scope>INTERACTION WITH TNFAIP3</scope>
</reference>
<reference key="15">
    <citation type="journal article" date="2001" name="FEBS Lett.">
        <title>CSN3 interacts with IKKgamma and inhibits TNF- but not IL-1-induced NF-kappaB activation.</title>
        <authorList>
            <person name="Hong X."/>
            <person name="Xu L.-G."/>
            <person name="Li X."/>
            <person name="Zhai Z."/>
            <person name="Shu H.-B."/>
        </authorList>
    </citation>
    <scope>INTERACTION WITH COPS3</scope>
</reference>
<reference key="16">
    <citation type="journal article" date="2001" name="J. Biol. Chem.">
        <title>Role of ikkgamma/nemo in assembly of the IkappaB kinase complex.</title>
        <authorList>
            <person name="Li X.-H."/>
            <person name="Fang X."/>
            <person name="Gaynor R.B."/>
        </authorList>
    </citation>
    <scope>SUBUNIT OF THE IKK COMPLEX</scope>
</reference>
<reference key="17">
    <citation type="journal article" date="2002" name="J. Biol. Chem.">
        <title>Association of the adaptor TANK with the I kappa B kinase (IKK) regulator NEMO connects IKK complexes with IKK epsilon and TBK1 kinases.</title>
        <authorList>
            <person name="Chariot A."/>
            <person name="Leonardi A."/>
            <person name="Muller J."/>
            <person name="Bonif M."/>
            <person name="Brown K."/>
            <person name="Siebenlist U."/>
        </authorList>
    </citation>
    <scope>INTERACTION WITH TANK AND IKBKB</scope>
</reference>
<reference key="18">
    <citation type="journal article" date="2002" name="Mol. Cell. Biol.">
        <title>Regulation of SRC-3 (pCIP/ACTR/AIB-1/RAC-3/TRAM-1) coactivator activity by I kappa B kinase.</title>
        <authorList>
            <person name="Wu R.-C."/>
            <person name="Qin J."/>
            <person name="Hashimoto Y."/>
            <person name="Wong J."/>
            <person name="Xu J."/>
            <person name="Tsai S.Y."/>
            <person name="Tsai M.-J."/>
            <person name="O'Malley B.W."/>
        </authorList>
    </citation>
    <scope>SUBUNIT OF A COMPLEX CONTAINING CREBBP; NCOA2; NCOA3; IKKA AND IKKB</scope>
</reference>
<reference key="19">
    <citation type="journal article" date="2003" name="Cell">
        <title>Sequential modification of NEMO/IKKgamma by SUMO-1 and ubiquitin mediates NF-kappaB activation by genotoxic stress.</title>
        <authorList>
            <person name="Huang T.T."/>
            <person name="Wuerzberger-Davis S.M."/>
            <person name="Wu Z.H."/>
            <person name="Miyamoto S."/>
        </authorList>
    </citation>
    <scope>SUMOYLATION AT LYS-277 AND LYS-309</scope>
    <scope>UBIQUITINATION AT LYS-277 AND LYS-309</scope>
    <scope>MUTAGENESIS OF LYS-277 AND LYS-309</scope>
    <scope>SUBCELLULAR LOCATION</scope>
    <scope>CHARACTERIZATION OF VARIANT EDAID1 ARG-417</scope>
</reference>
<reference key="20">
    <citation type="journal article" date="2003" name="J. Biol. Chem.">
        <title>In vivo identification of inducible phosphoacceptors in the IKKgamma/NEMO subunit of human IkappaB kinase.</title>
        <authorList>
            <person name="Carter R.S."/>
            <person name="Pennington K.N."/>
            <person name="Ungurait B.J."/>
            <person name="Ballard D.W."/>
        </authorList>
    </citation>
    <scope>PHOSPHORYLATION AT SER-31; SER-43 AND SER-376</scope>
</reference>
<reference key="21">
    <citation type="journal article" date="2003" name="Mol. Cell. Biol.">
        <title>Tetrameric oligomerization of IkappaB kinase gamma (IKKgamma) is obligatory for IKK complex activity and NF-kappaB activation.</title>
        <authorList>
            <person name="Tegethoff S."/>
            <person name="Behlke J."/>
            <person name="Scheidereit C."/>
        </authorList>
    </citation>
    <scope>SELF-ASSOCIATION</scope>
    <scope>COMPOSITION OF THE IKK COMPLEX</scope>
</reference>
<reference key="22">
    <citation type="journal article" date="2003" name="Nature">
        <title>The tumour suppressor CYLD negatively regulates NF-kappaB signalling by deubiquitination.</title>
        <authorList>
            <person name="Kovalenko A."/>
            <person name="Chable-Bessia C."/>
            <person name="Cantarella G."/>
            <person name="Israeel A."/>
            <person name="Wallach D."/>
            <person name="Courtois G."/>
        </authorList>
    </citation>
    <scope>INTERACTION WITH CYLD</scope>
</reference>
<reference key="23">
    <citation type="journal article" date="2004" name="Curr. Biol.">
        <title>The Crohn's disease protein, NOD2, requires RIP2 in order to induce ubiquitinylation of a novel site on NEMO.</title>
        <authorList>
            <person name="Abbott D.W."/>
            <person name="Wilkins A."/>
            <person name="Asara J.M."/>
            <person name="Cantley L.C."/>
        </authorList>
    </citation>
    <scope>UBIQUITINATION AT LYS-285</scope>
    <scope>MUTAGENESIS OF LYS-115; LYS-224; LYS-285 AND LYS-399</scope>
</reference>
<reference key="24">
    <citation type="journal article" date="2004" name="J. Biol. Chem.">
        <title>ZNF216 is an A20-like and IkappaB kinase gamma-interacting inhibitor of NFkappaB activation.</title>
        <authorList>
            <person name="Huang J."/>
            <person name="Teng L."/>
            <person name="Li L."/>
            <person name="Liu T."/>
            <person name="Li L."/>
            <person name="Chen D."/>
            <person name="Xu L.-G."/>
            <person name="Zhai Z."/>
            <person name="Shu H.-B."/>
        </authorList>
    </citation>
    <scope>INTERACTION WITH ZFAND5</scope>
</reference>
<reference key="25">
    <citation type="journal article" date="2004" name="J. Biol. Chem.">
        <title>PAN1/NALP2/PYPAF2, an inducible inflammatory mediator that regulates NF-kappaB and caspase-1 activation in macrophages.</title>
        <authorList>
            <person name="Bruey J.-M."/>
            <person name="Bruey-Sedano N."/>
            <person name="Newman R."/>
            <person name="Chandler S."/>
            <person name="Stehlik C."/>
            <person name="Reed J.C."/>
        </authorList>
    </citation>
    <scope>INTERACTION WITH NALP2</scope>
</reference>
<reference key="26">
    <citation type="journal article" date="2004" name="Mol. Cell">
        <title>The TRAF6 ubiquitin ligase and TAK1 kinase mediate IKK activation by BCL10 and MALT1 in T lymphocytes.</title>
        <authorList>
            <person name="Sun L."/>
            <person name="Deng L."/>
            <person name="Ea C.-K."/>
            <person name="Xia Z.-P."/>
            <person name="Chen Z.J."/>
        </authorList>
    </citation>
    <scope>UBIQUITINATION</scope>
</reference>
<reference key="27">
    <citation type="journal article" date="2004" name="Nature">
        <title>Bcl10 activates the NF-kappaB pathway through ubiquitination of NEMO.</title>
        <authorList>
            <person name="Zhou H."/>
            <person name="Wertz I."/>
            <person name="O'Rourke K."/>
            <person name="Ultsch M."/>
            <person name="Seshagiri S."/>
            <person name="Eby M."/>
            <person name="Xiao W."/>
            <person name="Dixit V.M."/>
        </authorList>
    </citation>
    <scope>FUNCTION</scope>
    <scope>UBIQUITINATION AT LYS-399</scope>
    <scope>MUTAGENESIS OF LYS-399</scope>
</reference>
<reference key="28">
    <citation type="journal article" date="2005" name="Cell">
        <title>PIDD mediates NF-kappaB activation in response to DNA damage.</title>
        <authorList>
            <person name="Janssens S."/>
            <person name="Tinel A."/>
            <person name="Lippens S."/>
            <person name="Tschopp J."/>
        </authorList>
    </citation>
    <scope>INTERACTION WITH PIDD1</scope>
</reference>
<reference key="29">
    <citation type="journal article" date="2006" name="Nat. Cell Biol.">
        <title>Sensing of Lys 63-linked polyubiquitination by NEMO is a key event in NF-kappaB activation.</title>
        <authorList>
            <person name="Wu C.J."/>
            <person name="Conze D.B."/>
            <person name="Li T."/>
            <person name="Srinivasula S.M."/>
            <person name="Ashwell J.D."/>
        </authorList>
    </citation>
    <scope>FUNCTION</scope>
    <scope>UBIQUITIN-BINDING</scope>
    <scope>MUTAGENESIS OF LEU-329</scope>
    <scope>CHARACTERIZATION OF VARIANT EDAID1 ASN-311</scope>
</reference>
<reference key="30">
    <citation type="journal article" date="2006" name="Nat. Cell Biol.">
        <authorList>
            <person name="Wu C.J."/>
            <person name="Conze D.B."/>
            <person name="Li T."/>
            <person name="Srinivasula S.M."/>
            <person name="Ashwell J.D."/>
        </authorList>
    </citation>
    <scope>ERRATUM OF PUBMED:16547522</scope>
</reference>
<reference key="31">
    <citation type="journal article" date="2006" name="Science">
        <title>Molecular linkage between the kinase ATM and NF-kappaB signaling in response to genotoxic stimuli.</title>
        <authorList>
            <person name="Wu Z.H."/>
            <person name="Shi Y."/>
            <person name="Tibbetts R.S."/>
            <person name="Miyamoto S."/>
        </authorList>
    </citation>
    <scope>INTERACTION WITH ATM</scope>
    <scope>PHOSPHORYLATION AT SER-85</scope>
    <scope>MUTAGENESIS OF SER-85</scope>
</reference>
<reference key="32">
    <citation type="journal article" date="2007" name="J. Biol. Chem.">
        <title>Site-specific Lys-63-linked tumor necrosis factor receptor-associated factor 6 auto-ubiquitination is a critical determinant of I kappa B kinase activation.</title>
        <authorList>
            <person name="Lamothe B."/>
            <person name="Besse A."/>
            <person name="Campos A.D."/>
            <person name="Webster W.K."/>
            <person name="Wu H."/>
            <person name="Darnay B.G."/>
        </authorList>
    </citation>
    <scope>UBIQUITINATION</scope>
</reference>
<reference key="33">
    <citation type="journal article" date="2007" name="Mol. Cell. Biol.">
        <title>Coordinated regulation of Toll-like receptor and NOD2 signaling by K63-linked polyubiquitin chains.</title>
        <authorList>
            <person name="Abbott D.W."/>
            <person name="Yang Y."/>
            <person name="Hutti J.E."/>
            <person name="Madhavarapu S."/>
            <person name="Kelliher M.A."/>
            <person name="Cantley L.C."/>
        </authorList>
    </citation>
    <scope>UBIQUITINATION AT LYS-285</scope>
    <scope>MUTAGENESIS OF LYS-285 AND LYS-399</scope>
</reference>
<reference key="34">
    <citation type="journal article" date="2008" name="Biochem. Biophys. Res. Commun.">
        <title>Intermolecular disulfide bond formation in the NEMO dimer requires Cys54 and Cys347.</title>
        <authorList>
            <person name="Herscovitch M."/>
            <person name="Comb W."/>
            <person name="Ennis T."/>
            <person name="Coleman K."/>
            <person name="Yong S."/>
            <person name="Armstead B."/>
            <person name="Kalaitzidis D."/>
            <person name="Chandani S."/>
            <person name="Gilmore T.D."/>
        </authorList>
    </citation>
    <scope>SUBUNIT</scope>
    <scope>DISULFIDE BONDS</scope>
</reference>
<reference key="35">
    <citation type="journal article" date="2008" name="EMBO J.">
        <title>A critical role of RICK/RIP2 polyubiquitination in Nod-induced NF-kappaB activation.</title>
        <authorList>
            <person name="Hasegawa M."/>
            <person name="Fujimoto Y."/>
            <person name="Lucas P.C."/>
            <person name="Nakano H."/>
            <person name="Fukase K."/>
            <person name="Nunez G."/>
            <person name="Inohara N."/>
        </authorList>
    </citation>
    <scope>INTERACTION WITH RIPK2</scope>
</reference>
<reference key="36">
    <citation type="journal article" date="2008" name="J. Biol. Chem.">
        <title>Phosphorylation of serine 68 in the IkappaB kinase (IKK)-binding domain of NEMO interferes with the structure of the IKK complex and tumor necrosis factor-alpha-induced NF-kappaB activity.</title>
        <authorList>
            <person name="Palkowitsch L."/>
            <person name="Leidner J."/>
            <person name="Ghosh S."/>
            <person name="Marienfeld R.B."/>
        </authorList>
    </citation>
    <scope>INTERACTION WITH IKBKB</scope>
    <scope>PHOSPHORYLATION AT SER-68</scope>
    <scope>MUTAGENESIS OF SER-68</scope>
</reference>
<reference key="37">
    <citation type="journal article" date="2008" name="Mol. Cell">
        <title>Kinase-selective enrichment enables quantitative phosphoproteomics of the kinome across the cell cycle.</title>
        <authorList>
            <person name="Daub H."/>
            <person name="Olsen J.V."/>
            <person name="Bairlein M."/>
            <person name="Gnad F."/>
            <person name="Oppermann F.S."/>
            <person name="Korner R."/>
            <person name="Greff Z."/>
            <person name="Keri G."/>
            <person name="Stemmann O."/>
            <person name="Mann M."/>
        </authorList>
    </citation>
    <scope>IDENTIFICATION BY MASS SPECTROMETRY [LARGE SCALE ANALYSIS]</scope>
    <source>
        <tissue>Cervix carcinoma</tissue>
    </source>
</reference>
<reference key="38">
    <citation type="journal article" date="2008" name="Proc. Natl. Acad. Sci. U.S.A.">
        <title>NEMO recognition of ubiquitinated Bcl10 is required for T cell receptor-mediated NF-kappaB activation.</title>
        <authorList>
            <person name="Wu C.J."/>
            <person name="Ashwell J.D."/>
        </authorList>
    </citation>
    <scope>FUNCTION</scope>
    <scope>UBIQUITIN-BINDING</scope>
    <scope>INTERACTION WITH BCL10</scope>
    <scope>MUTAGENESIS OF LEU-329</scope>
</reference>
<reference key="39">
    <citation type="journal article" date="2008" name="Proc. Natl. Acad. Sci. U.S.A.">
        <title>A quantitative atlas of mitotic phosphorylation.</title>
        <authorList>
            <person name="Dephoure N."/>
            <person name="Zhou C."/>
            <person name="Villen J."/>
            <person name="Beausoleil S.A."/>
            <person name="Bakalarski C.E."/>
            <person name="Elledge S.J."/>
            <person name="Gygi S.P."/>
        </authorList>
    </citation>
    <scope>IDENTIFICATION BY MASS SPECTROMETRY [LARGE SCALE ANALYSIS]</scope>
    <source>
        <tissue>Cervix carcinoma</tissue>
    </source>
</reference>
<reference key="40">
    <citation type="journal article" date="2009" name="J. Biol. Chem.">
        <title>The zinc finger of NEMO is a functional ubiquitin-binding domain.</title>
        <authorList>
            <person name="Cordier F."/>
            <person name="Grubisha O."/>
            <person name="Traincard F."/>
            <person name="Veron M."/>
            <person name="Delepierre M."/>
            <person name="Agou F."/>
        </authorList>
    </citation>
    <scope>FUNCTION</scope>
    <scope>UBIQUITIN-BINDING</scope>
    <scope>MUTAGENESIS OF VAL-414 AND MET-415</scope>
    <scope>CHARACTERIZATION OF VARIANT IP VAL-407</scope>
</reference>
<reference key="41">
    <citation type="journal article" date="2009" name="Mol. Cell">
        <title>Key role of Ubc5 and lysine-63 polyubiquitination in viral activation of IRF3.</title>
        <authorList>
            <person name="Zeng W."/>
            <person name="Xu M."/>
            <person name="Liu S."/>
            <person name="Sun L."/>
            <person name="Chen Z.J."/>
        </authorList>
    </citation>
    <scope>FUNCTION</scope>
    <scope>DOMAIN LEUCINE-ZIPPER AND C2HC-TYPE ZINC-FINGER</scope>
</reference>
<reference key="42">
    <citation type="journal article" date="2009" name="Nat. Cell Biol.">
        <title>Involvement of linear polyubiquitylation of NEMO in NF-kappaB activation.</title>
        <authorList>
            <person name="Tokunaga F."/>
            <person name="Sakata S."/>
            <person name="Saeki Y."/>
            <person name="Satomi Y."/>
            <person name="Kirisako T."/>
            <person name="Kamei K."/>
            <person name="Nakagawa T."/>
            <person name="Kato M."/>
            <person name="Murata S."/>
            <person name="Yamaoka S."/>
            <person name="Yamamoto M."/>
            <person name="Akira S."/>
            <person name="Takao T."/>
            <person name="Tanaka K."/>
            <person name="Iwai K."/>
        </authorList>
    </citation>
    <scope>UBIQUITINATION AT LYS-285 AND LYS-309</scope>
</reference>
<reference key="43">
    <citation type="journal article" date="2010" name="J. Mol. Biol.">
        <title>DARPin-assisted crystallography of the CC2-LZ domain of NEMO reveals a coupling between dimerization and ubiquitin binding.</title>
        <authorList>
            <person name="Grubisha O."/>
            <person name="Kaminska M."/>
            <person name="Duquerroy S."/>
            <person name="Fontan E."/>
            <person name="Cordier F."/>
            <person name="Haouz A."/>
            <person name="Raynal B."/>
            <person name="Chiaravalli J."/>
            <person name="Delepierre M."/>
            <person name="Israel A."/>
            <person name="Veron M."/>
            <person name="Agou F."/>
        </authorList>
    </citation>
    <scope>MUTAGENESIS OF GLU-296; PHE-312; GLU-315; ALA-323; LEU-329 AND LEU-336</scope>
    <scope>CHARACTERIZATION OF VARIANTS IMD33 ALA-315 AND PRO-323</scope>
</reference>
<reference key="44">
    <citation type="journal article" date="2010" name="Nat. Cell Biol.">
        <title>A bacterial E3 ubiquitin ligase IpaH9.8 targets NEMO/IKKgamma to dampen the host NF-kappaB-mediated inflammatory response.</title>
        <authorList>
            <person name="Ashida H."/>
            <person name="Kim M."/>
            <person name="Schmidt-Supprian M."/>
            <person name="Ma A."/>
            <person name="Ogawa M."/>
            <person name="Sasakawa C."/>
        </authorList>
    </citation>
    <scope>INTERACTION WITH SHIGELLA FLEXNERI IPAH9.8 (MICROBIAL INFECTION)</scope>
    <scope>UBIQUITINATION AT LYS-309 AND LYS-321</scope>
</reference>
<reference key="45">
    <citation type="journal article" date="2010" name="Proc. Natl. Acad. Sci. U.S.A.">
        <title>Polyubiquitin conjugation to NEMO by tripartite motif protein 23 (TRIM23) is critical in antiviral defense.</title>
        <authorList>
            <person name="Arimoto K."/>
            <person name="Funami K."/>
            <person name="Saeki Y."/>
            <person name="Tanaka K."/>
            <person name="Okawa K."/>
            <person name="Takeuchi O."/>
            <person name="Akira S."/>
            <person name="Murakami Y."/>
            <person name="Shimotohno K."/>
        </authorList>
    </citation>
    <scope>FUNCTION</scope>
    <scope>UBIQUITINATION</scope>
</reference>
<reference key="46">
    <citation type="journal article" date="2010" name="Sci. Signal.">
        <title>Quantitative phosphoproteomics reveals widespread full phosphorylation site occupancy during mitosis.</title>
        <authorList>
            <person name="Olsen J.V."/>
            <person name="Vermeulen M."/>
            <person name="Santamaria A."/>
            <person name="Kumar C."/>
            <person name="Miller M.L."/>
            <person name="Jensen L.J."/>
            <person name="Gnad F."/>
            <person name="Cox J."/>
            <person name="Jensen T.S."/>
            <person name="Nigg E.A."/>
            <person name="Brunak S."/>
            <person name="Mann M."/>
        </authorList>
    </citation>
    <scope>IDENTIFICATION BY MASS SPECTROMETRY [LARGE SCALE ANALYSIS]</scope>
    <source>
        <tissue>Cervix carcinoma</tissue>
    </source>
</reference>
<reference key="47">
    <citation type="journal article" date="2011" name="J. Biol. Chem.">
        <title>TRAF7 protein promotes Lys-29-linked polyubiquitination of IkappaB kinase (IKKgamma)/NF-kappaB essential modulator (NEMO) and p65/RelA protein and represses NF-kappaB activation.</title>
        <authorList>
            <person name="Zotti T."/>
            <person name="Uva A."/>
            <person name="Ferravante A."/>
            <person name="Vessichelli M."/>
            <person name="Scudiero I."/>
            <person name="Ceccarelli M."/>
            <person name="Vito P."/>
            <person name="Stilo R."/>
        </authorList>
    </citation>
    <scope>FUNCTION</scope>
    <scope>UBIQUITINATION BY TRAF7</scope>
</reference>
<reference key="48">
    <citation type="journal article" date="2011" name="BMC Syst. Biol.">
        <title>Initial characterization of the human central proteome.</title>
        <authorList>
            <person name="Burkard T.R."/>
            <person name="Planyavsky M."/>
            <person name="Kaupe I."/>
            <person name="Breitwieser F.P."/>
            <person name="Buerckstuemmer T."/>
            <person name="Bennett K.L."/>
            <person name="Superti-Furga G."/>
            <person name="Colinge J."/>
        </authorList>
    </citation>
    <scope>IDENTIFICATION BY MASS SPECTROMETRY [LARGE SCALE ANALYSIS]</scope>
</reference>
<reference key="49">
    <citation type="journal article" date="2011" name="Carcinogenesis">
        <title>TRIM40 promotes neddylation of IKKgamma and is downregulated in gastrointestinal cancers.</title>
        <authorList>
            <person name="Noguchi K."/>
            <person name="Okumura F."/>
            <person name="Takahashi N."/>
            <person name="Kataoka A."/>
            <person name="Kamiyama T."/>
            <person name="Todo S."/>
            <person name="Hatakeyama S."/>
        </authorList>
    </citation>
    <scope>NEDDYLATION BY TRIM40</scope>
</reference>
<reference key="50">
    <citation type="journal article" date="2011" name="J. Exp. Med.">
        <title>Polyubiquitin binding to ABIN1 is required to prevent autoimmunity.</title>
        <authorList>
            <person name="Nanda S.K."/>
            <person name="Venigalla R.K."/>
            <person name="Ordureau A."/>
            <person name="Patterson-Kane J.C."/>
            <person name="Powell D.W."/>
            <person name="Toth R."/>
            <person name="Arthur J.S."/>
            <person name="Cohen P."/>
        </authorList>
    </citation>
    <scope>FUNCTION</scope>
    <scope>UBIQUITIN-BINDING</scope>
    <scope>CHARACTERIZATION OF VARIANT EDAID1 ASN-311</scope>
</reference>
<reference key="51">
    <citation type="journal article" date="2011" name="Mol. Cell">
        <title>Direct, noncatalytic mechanism of IKK inhibition by A20.</title>
        <authorList>
            <person name="Skaug B."/>
            <person name="Chen J."/>
            <person name="Du F."/>
            <person name="He J."/>
            <person name="Ma A."/>
            <person name="Chen Z.J."/>
        </authorList>
    </citation>
    <scope>INTERACTION WITH TNFAIP3</scope>
</reference>
<reference key="52">
    <citation type="journal article" date="2011" name="Nature">
        <title>Linear ubiquitination prevents inflammation and regulates immune signalling.</title>
        <authorList>
            <person name="Gerlach B."/>
            <person name="Cordier S.M."/>
            <person name="Schmukle A.C."/>
            <person name="Emmerich C.H."/>
            <person name="Rieser E."/>
            <person name="Haas T.L."/>
            <person name="Webb A.I."/>
            <person name="Rickard J.A."/>
            <person name="Anderton H."/>
            <person name="Wong W.W."/>
            <person name="Nachbur U."/>
            <person name="Gangoda L."/>
            <person name="Warnken U."/>
            <person name="Purcell A.W."/>
            <person name="Silke J."/>
            <person name="Walczak H."/>
        </authorList>
    </citation>
    <scope>UBIQUITINATION BY THE LUBAC COMPLEX</scope>
</reference>
<reference key="53">
    <citation type="journal article" date="2011" name="Nature">
        <title>SHARPIN is a component of the NF-kappaB-activating linear ubiquitin chain assembly complex.</title>
        <authorList>
            <person name="Tokunaga F."/>
            <person name="Nakagawa T."/>
            <person name="Nakahara M."/>
            <person name="Saeki Y."/>
            <person name="Taniguchi M."/>
            <person name="Sakata S."/>
            <person name="Tanaka K."/>
            <person name="Nakano H."/>
            <person name="Iwai K."/>
        </authorList>
    </citation>
    <scope>UBIQUITINATION BY THE LUBAC COMPLEX</scope>
</reference>
<reference key="54">
    <citation type="journal article" date="2011" name="Nature">
        <title>SHARPIN forms a linear ubiquitin ligase complex regulating NF-kappaB activity and apoptosis.</title>
        <authorList>
            <person name="Ikeda F."/>
            <person name="Deribe Y.L."/>
            <person name="Skanland S.S."/>
            <person name="Stieglitz B."/>
            <person name="Grabbe C."/>
            <person name="Franz-Wachtel M."/>
            <person name="van Wijk S.J."/>
            <person name="Goswami P."/>
            <person name="Nagy V."/>
            <person name="Terzic J."/>
            <person name="Tokunaga F."/>
            <person name="Androulidaki A."/>
            <person name="Nakagawa T."/>
            <person name="Pasparakis M."/>
            <person name="Iwai K."/>
            <person name="Sundberg J.P."/>
            <person name="Schaefer L."/>
            <person name="Rittinger K."/>
            <person name="Macek B."/>
            <person name="Dikic I."/>
        </authorList>
    </citation>
    <scope>UBIQUITINATION AT LYS-277; LYS-285; LYS-309; LYS-326; LYS-111; LYS-143; LYS-226; LYS-246; LYS-264; LYS-292 AND LYS-302 BY THE LUBAC COMPLEX</scope>
    <scope>UBIQUITINATION AT LYS-139 AND LYS-283</scope>
</reference>
<reference key="55">
    <citation type="journal article" date="2012" name="Cell. Microbiol.">
        <title>NLRP10 enhances Shigella-induced pro-inflammatory responses.</title>
        <authorList>
            <person name="Lautz K."/>
            <person name="Damm A."/>
            <person name="Menning M."/>
            <person name="Wenger J."/>
            <person name="Adam A.C."/>
            <person name="Zigrino P."/>
            <person name="Kremmer E."/>
            <person name="Kufer T.A."/>
        </authorList>
    </citation>
    <scope>INTERACTION WITH NLRP10</scope>
</reference>
<reference key="56">
    <citation type="journal article" date="2013" name="Cell Rep.">
        <title>IKKepsilon-mediated tumorigenesis requires K63-linked polyubiquitination by a cIAP1/cIAP2/TRAF2 E3 ubiquitin ligase complex.</title>
        <authorList>
            <person name="Zhou A.Y."/>
            <person name="Shen R.R."/>
            <person name="Kim E."/>
            <person name="Lock Y.J."/>
            <person name="Xu M."/>
            <person name="Chen Z.J."/>
            <person name="Hahn W.C."/>
        </authorList>
    </citation>
    <scope>INTERACTION WITH IKBKE</scope>
</reference>
<reference key="57">
    <citation type="journal article" date="2013" name="Protein Expr. Purif.">
        <title>Identifying post-translational modifications of NEMO by tandem mass spectrometry after high affinity purification.</title>
        <authorList>
            <person name="Jackson S.S."/>
            <person name="Coughlin E.E."/>
            <person name="Coon J.J."/>
            <person name="Miyamoto S."/>
        </authorList>
    </citation>
    <scope>PHOSPHORYLATION AT SER-387</scope>
</reference>
<reference key="58">
    <citation type="journal article" date="2014" name="J. Proteomics">
        <title>An enzyme assisted RP-RPLC approach for in-depth analysis of human liver phosphoproteome.</title>
        <authorList>
            <person name="Bian Y."/>
            <person name="Song C."/>
            <person name="Cheng K."/>
            <person name="Dong M."/>
            <person name="Wang F."/>
            <person name="Huang J."/>
            <person name="Sun D."/>
            <person name="Wang L."/>
            <person name="Ye M."/>
            <person name="Zou H."/>
        </authorList>
    </citation>
    <scope>PHOSPHORYLATION [LARGE SCALE ANALYSIS] AT SER-387</scope>
    <scope>IDENTIFICATION BY MASS SPECTROMETRY [LARGE SCALE ANALYSIS]</scope>
    <source>
        <tissue>Liver</tissue>
    </source>
</reference>
<reference key="59">
    <citation type="journal article" date="2014" name="PLoS Pathog.">
        <title>Epstein-Barr virus large tegument protein BPLF1 contributes to innate immune evasion through interference with toll-like receptor signaling.</title>
        <authorList>
            <person name="van Gent M."/>
            <person name="Braem S.G."/>
            <person name="de Jong A."/>
            <person name="Delagic N."/>
            <person name="Peeters J.G."/>
            <person name="Boer I.G."/>
            <person name="Moynagh P.N."/>
            <person name="Kremmer E."/>
            <person name="Wiertz E.J."/>
            <person name="Ovaa H."/>
            <person name="Griffin B.D."/>
            <person name="Ressing M.E."/>
        </authorList>
    </citation>
    <scope>SUBCELLULAR LOCATION</scope>
    <scope>DEUBIQUITINATION BY EPSTEIN-BARR VIRUS PROTEIN BPLF1 (MICROBIAL INFECTION)</scope>
</reference>
<reference key="60">
    <citation type="journal article" date="2015" name="Cell. Signal.">
        <title>IFIT5 positively regulates NF-kappaB signaling through synergizing the recruitment of IkappaB kinase (IKK) to TGF-beta-activated kinase 1 (TAK1).</title>
        <authorList>
            <person name="Zheng C."/>
            <person name="Zheng Z."/>
            <person name="Zhang Z."/>
            <person name="Meng J."/>
            <person name="Liu Y."/>
            <person name="Ke X."/>
            <person name="Hu Q."/>
            <person name="Wang H."/>
        </authorList>
    </citation>
    <scope>INTERACTION WITH IFIT5</scope>
</reference>
<reference key="61">
    <citation type="journal article" date="2015" name="J. Biol. Chem.">
        <title>TRAF family member-associated NF-kappaB activator (TANK) inhibits genotoxic nuclear factor kappaB activation by facilitating deubiquitinase USP10-dependent deubiquitination of TRAF6 ligase.</title>
        <authorList>
            <person name="Wang W."/>
            <person name="Huang X."/>
            <person name="Xin H.B."/>
            <person name="Fu M."/>
            <person name="Xue A."/>
            <person name="Wu Z.H."/>
        </authorList>
    </citation>
    <scope>INTERACTION WITH TANK; USP10 AND ZC3H12A</scope>
    <scope>DEUBIQUITINATION BY USP10</scope>
</reference>
<reference key="62">
    <citation type="journal article" date="2015" name="Cell. Signal.">
        <title>Dimer of arfaptin 2 regulates NF-kappaB signaling by interacting with IKKbeta/NEMO and inhibiting IKKbeta kinase activity.</title>
        <authorList>
            <person name="You D.J."/>
            <person name="Park C.R."/>
            <person name="Furlong M."/>
            <person name="Koo O."/>
            <person name="Lee C."/>
            <person name="Ahn C."/>
            <person name="Seong J.Y."/>
            <person name="Hwang J.I."/>
        </authorList>
    </citation>
    <scope>INTERACTION WITH ARFIP2</scope>
</reference>
<reference key="63">
    <citation type="journal article" date="2016" name="J. Biol. Chem.">
        <title>Molecular determinants of scaffold-induced linear ubiquitinylation of B Cell Lymphoma/Leukemia 10 (Bcl10) during T cell receptor and oncogenic caspase recruitment domain-containing protein 11 (CARD11) signaling.</title>
        <authorList>
            <person name="Yang Y.K."/>
            <person name="Yang C."/>
            <person name="Chan W."/>
            <person name="Wang Z."/>
            <person name="Deibel K.E."/>
            <person name="Pomerantz J.L."/>
        </authorList>
    </citation>
    <scope>FUNCTION</scope>
    <scope>UBIQUITIN-BINDING</scope>
    <scope>INTERACTION WITH BCL10</scope>
</reference>
<reference key="64">
    <citation type="journal article" date="2017" name="J. Virol.">
        <title>Molluscum contagiosum virus protein MC005 inhibits NF-kappaB activation by targeting NEMO-regulated IkappaB kinase activation.</title>
        <authorList>
            <person name="Brady G."/>
            <person name="Haas D.A."/>
            <person name="Farrell P.J."/>
            <person name="Pichlmair A."/>
            <person name="Bowie A.G."/>
        </authorList>
    </citation>
    <scope>INTERACTION WITH MOLLUSCUM CONTAGIOSUM VIRUS PROTEIN MC005 (MICROBIAL INFECTION)</scope>
</reference>
<reference key="65">
    <citation type="journal article" date="2020" name="EMBO J.">
        <title>Negative regulation of NEMO signaling by the ubiquitin E3 ligase MARCH2.</title>
        <authorList>
            <person name="Chathuranga K."/>
            <person name="Kim T.H."/>
            <person name="Lee H."/>
            <person name="Park J.S."/>
            <person name="Kim J.H."/>
            <person name="Chathuranga W.A.G."/>
            <person name="Ekanayaka P."/>
            <person name="Choi Y.J."/>
            <person name="Lee C.H."/>
            <person name="Kim C.J."/>
            <person name="Jung J.U."/>
            <person name="Lee J.S."/>
        </authorList>
    </citation>
    <scope>IDENTIFICATION IN THE IKK COMPLEX</scope>
    <scope>INTERACTION WITH MARCHF2</scope>
    <scope>UBIQUITINATION AT LYS-326</scope>
    <scope>MUTAGENESIS OF LYS-302; LYS-309; LYS-321; LYS-325; LYS-326; LYS-342; LYS-344 AND LYS-358</scope>
</reference>
<reference key="66">
    <citation type="journal article" date="2021" name="Cell Rep.">
        <title>SARS-CoV-2 ORF9b inhibits RIG-I-MAVS antiviral signaling by interrupting K63-linked ubiquitination of NEMO.</title>
        <authorList>
            <person name="Wu J."/>
            <person name="Shi Y."/>
            <person name="Pan X."/>
            <person name="Wu S."/>
            <person name="Hou R."/>
            <person name="Zhang Y."/>
            <person name="Zhong T."/>
            <person name="Tang H."/>
            <person name="Du W."/>
            <person name="Wang L."/>
            <person name="Wo J."/>
            <person name="Mu J."/>
            <person name="Qiu Y."/>
            <person name="Yang K."/>
            <person name="Zhang L.K."/>
            <person name="Ye B.C."/>
            <person name="Qi N."/>
        </authorList>
    </citation>
    <scope>INTERACTION WITH SARS-COV-2 VIRUS PROTEIN ORF9B (MICROBIAL INFECTION)</scope>
    <scope>UBIQUITINATION</scope>
    <scope>FUNCTION</scope>
</reference>
<reference key="67">
    <citation type="journal article" date="2008" name="J. Mol. Biol.">
        <title>Solution structure of NEMO zinc finger and impact of an anhidrotic ectodermal dysplasia with immunodeficiency-related point mutation.</title>
        <authorList>
            <person name="Cordier F."/>
            <person name="Vinolo E."/>
            <person name="Veron M."/>
            <person name="Delepierre M."/>
            <person name="Agou F."/>
        </authorList>
    </citation>
    <scope>STRUCTURE BY NMR OF 394-419 OF WILD-TYPE AND MUTANT PHE-417</scope>
    <scope>DOMAIN ZINC-FINGER</scope>
</reference>
<reference key="68">
    <citation type="journal article" date="2008" name="Structure">
        <title>Structure of a NEMO/IKK-associating domain reveals architecture of the interaction site.</title>
        <authorList>
            <person name="Rushe M."/>
            <person name="Silvian L."/>
            <person name="Bixler S."/>
            <person name="Chen L.L."/>
            <person name="Cheung A."/>
            <person name="Bowes S."/>
            <person name="Cuervo H."/>
            <person name="Berkowitz S."/>
            <person name="Zheng T."/>
            <person name="Guckian K."/>
            <person name="Pellegrini M."/>
            <person name="Lugovskoy A."/>
        </authorList>
    </citation>
    <scope>X-RAY CRYSTALLOGRAPHY (2.2 ANGSTROMS) OF 44-111 IN COMPLEX WITH CHUK AND IKBKB</scope>
    <scope>SUBUNIT</scope>
</reference>
<reference key="69">
    <citation type="journal article" date="2009" name="Mol. Cell">
        <title>Structural basis for recognition of diubiquitins by NEMO.</title>
        <authorList>
            <person name="Lo Y.C."/>
            <person name="Lin S.C."/>
            <person name="Rospigliosi C.C."/>
            <person name="Conze D.B."/>
            <person name="Wu C.J."/>
            <person name="Ashwell J.D."/>
            <person name="Eliezer D."/>
            <person name="Wu H."/>
        </authorList>
    </citation>
    <scope>X-RAY CRYSTALLOGRAPHY (3.2 ANGSTROMS) OF 246-337</scope>
    <scope>FUNCTION</scope>
    <scope>UBIQUITIN-BINDING</scope>
    <scope>MUTAGENESIS OF VAL-300; LEU-301; GLN-304; ILE-307; TYR-308; PHE-312; GLN-313 AND GLN-317</scope>
    <scope>CHARACTERIZATION OF VARIANT EDAID1 ASN-311</scope>
    <scope>CHARACTERIZATION OF VARIANT IMD33 ALA-315</scope>
    <scope>CHARACTERIZATION OF VARIANTS GLN-319 AND IP PRO-323</scope>
</reference>
<reference key="70">
    <citation type="journal article" date="2000" name="Am. J. Hum. Genet.">
        <title>A novel X-linked disorder of immune deficiency and hypohidrotic ectodermal dysplasia is allelic to incontinentia pigmenti and due to mutations in IKK-gamma (NEMO).</title>
        <authorList>
            <person name="Zonana J."/>
            <person name="Elder M.E."/>
            <person name="Schneider L.C."/>
            <person name="Orlow S.J."/>
            <person name="Moss C."/>
            <person name="Golabi M."/>
            <person name="Shapira S.K."/>
            <person name="Farndon P.A."/>
            <person name="Wara D.W."/>
            <person name="Emmal S.A."/>
            <person name="Ferguson B.M."/>
        </authorList>
    </citation>
    <scope>VARIANTS EDAID1 ARG-417 AND PHE-417</scope>
</reference>
<reference key="71">
    <citation type="journal article" date="2001" name="Hum. Mol. Genet.">
        <title>A recurrent deletion in the ubiquitously expressed NEMO (IKK-gamma) gene accounts for the vast majority of incontinentia pigmenti mutations.</title>
        <authorList>
            <person name="Aradhya S."/>
            <person name="Woffendin H."/>
            <person name="Jakins T."/>
            <person name="Bardaro T."/>
            <person name="Esposito T."/>
            <person name="Smahi A."/>
            <person name="Shaw C."/>
            <person name="Levy M."/>
            <person name="Munnich A."/>
            <person name="D'Urso M."/>
            <person name="Lewis R.A."/>
            <person name="Kenwrick S."/>
            <person name="Nelson D.L."/>
        </authorList>
    </citation>
    <scope>VARIANTS IP LYS-57 AND VAL-407</scope>
</reference>
<reference key="72">
    <citation type="journal article" date="2001" name="Nat. Genet.">
        <title>X-linked anhidrotic ectodermal dysplasia with immunodeficiency is caused by impaired NF-kappa B signaling.</title>
        <authorList>
            <person name="Doeffinger R."/>
            <person name="Smahi A."/>
            <person name="Bessia C."/>
            <person name="Geissmann F."/>
            <person name="Feinberg J."/>
            <person name="Durandy A."/>
            <person name="Bodemer C."/>
            <person name="Kenwrick S.J."/>
            <person name="Dupuis-Girod S."/>
            <person name="Blanche S."/>
            <person name="Wood P."/>
            <person name="Rabia S.H."/>
            <person name="Headon D.J."/>
            <person name="Overbeek P.A."/>
            <person name="Le Deist F."/>
            <person name="Holland S.M."/>
            <person name="Belani K."/>
            <person name="Kumararatne D.S."/>
            <person name="Fischer A."/>
            <person name="Shapiro R."/>
            <person name="Conley M.E."/>
            <person name="Reimund E."/>
            <person name="Kalhoff H."/>
            <person name="Abinun M."/>
            <person name="Munnich A."/>
            <person name="Israael A."/>
            <person name="Courtois G."/>
            <person name="Casanova J.-L."/>
        </authorList>
    </citation>
    <scope>INVOLVEMENT IN EDAID1</scope>
    <scope>VARIANTS EDAID1 PRO-175; PRO-227; GLY-288; ASN-311; ARG-417 AND PHE-417</scope>
</reference>
<reference key="73">
    <citation type="journal article" date="2001" name="Nat. Immunol.">
        <title>Specific missense mutations in NEMO result in hyper-IgM syndrome with hypohydrotic ectodermal dysplasia.</title>
        <authorList>
            <person name="Jain A."/>
            <person name="Ma C.A."/>
            <person name="Liu S."/>
            <person name="Brown M."/>
            <person name="Cohen J."/>
            <person name="Strober W."/>
        </authorList>
    </citation>
    <scope>VARIANTS EDAID1 VAL-406 AND ARG-417</scope>
</reference>
<reference key="74">
    <citation type="journal article" date="2002" name="J. Clin. Invest.">
        <title>Deficient natural killer cell cytotoxicity in patients with IKK-gamma/NEMO mutations.</title>
        <authorList>
            <person name="Orange J.S."/>
            <person name="Brodeur S.R."/>
            <person name="Jain A."/>
            <person name="Bonilla F.A."/>
            <person name="Schneider L.C."/>
            <person name="Kretschmer R."/>
            <person name="Nurko S."/>
            <person name="Rasmussen W.L."/>
            <person name="Koehler J.R."/>
            <person name="Gellis S.E."/>
            <person name="Ferguson B.M."/>
            <person name="Strominger J.L."/>
            <person name="Zonana J."/>
            <person name="Ramesh N."/>
            <person name="Ballas Z.K."/>
            <person name="Geha R.S."/>
        </authorList>
    </citation>
    <scope>VARIANTS EDAID1 ARG-153 AND ARG-417</scope>
</reference>
<reference key="75">
    <citation type="journal article" date="2004" name="Hum. Mol. Genet.">
        <title>Molecular analysis of the genetic defect in a large cohort of IP patients and identification of novel NEMO mutations interfering with NF-kappaB activation.</title>
        <authorList>
            <person name="Fusco F."/>
            <person name="Bardaro T."/>
            <person name="Fimiani G."/>
            <person name="Mercadante V."/>
            <person name="Miano M.G."/>
            <person name="Falco G."/>
            <person name="Israeel A."/>
            <person name="Courtois G."/>
            <person name="D'Urso M."/>
            <person name="Ursini M.V."/>
        </authorList>
    </citation>
    <scope>VARIANTS IP LYS-57; LYS-90 DEL AND TRP-123</scope>
    <scope>VARIANT ASN-113</scope>
    <scope>CHARACTERIZATION OF VARIANTS IP LYS-57; LYS-90 DEL AND TRP-123</scope>
    <scope>CHARACTERIZATION OF VARIANT ASN-113</scope>
</reference>
<reference key="76">
    <citation type="journal article" date="2004" name="J. Allergy Clin. Immunol.">
        <title>The presentation and natural history of immunodeficiency caused by nuclear factor kappaB essential modulator mutation.</title>
        <authorList>
            <person name="Orange J.S."/>
            <person name="Jain A."/>
            <person name="Ballas Z.K."/>
            <person name="Schneider L.C."/>
            <person name="Geha R.S."/>
            <person name="Bonilla F.A."/>
        </authorList>
    </citation>
    <scope>VARIANTS EDAID1 ARG-153 AND ARG-417</scope>
    <scope>VARIANT IMD33 TYR-417</scope>
</reference>
<reference key="77">
    <citation type="journal article" date="2004" name="J. Allergy Clin. Immunol.">
        <title>Human nuclear factor kappa B essential modulator mutation can result in immunodeficiency without ectodermal dysplasia.</title>
        <authorList>
            <person name="Orange J.S."/>
            <person name="Levy O."/>
            <person name="Brodeur S.R."/>
            <person name="Krzewski K."/>
            <person name="Roy R.M."/>
            <person name="Niemela J.E."/>
            <person name="Fleisher T.A."/>
            <person name="Bonilla F.A."/>
            <person name="Geha R.S."/>
        </authorList>
    </citation>
    <scope>INVOLVEMENT IN IMD33</scope>
</reference>
<reference key="78">
    <citation type="journal article" date="2014" name="Cell. Signal.">
        <title>TRIM13 regulates ubiquitination and turnover of NEMO to suppress TNF induced NF-kappaB activation.</title>
        <authorList>
            <person name="Tomar D."/>
            <person name="Singh R."/>
        </authorList>
    </citation>
    <scope>INTERACTION WITH TRIM13</scope>
</reference>
<reference key="79">
    <citation type="journal article" date="2014" name="J. Virol.">
        <title>Hepatitis A virus 3C protease cleaves NEMO to impair induction of beta interferon.</title>
        <authorList>
            <person name="Wang D."/>
            <person name="Fang L."/>
            <person name="Wei D."/>
            <person name="Zhang H."/>
            <person name="Luo R."/>
            <person name="Chen H."/>
            <person name="Li K."/>
            <person name="Xiao S."/>
        </authorList>
    </citation>
    <scope>CLEAVAGE BY HAV PROTEASE 3C (MICROBIAL INFECTION)</scope>
    <scope>CLEAVAGE SITES</scope>
    <scope>MUTAGENESIS OF GLN-304</scope>
</reference>
<reference key="80">
    <citation type="journal article" date="2016" name="Nat. Immunol.">
        <title>Identification of a role for TRIM29 in the control of innate immunity in the respiratory tract.</title>
        <authorList>
            <person name="Xing J."/>
            <person name="Weng L."/>
            <person name="Yuan B."/>
            <person name="Wang Z."/>
            <person name="Jia L."/>
            <person name="Jin R."/>
            <person name="Lu H."/>
            <person name="Li X.C."/>
            <person name="Liu Y.J."/>
            <person name="Zhang Z."/>
        </authorList>
    </citation>
    <scope>INTERACTION WITH TRIM29</scope>
</reference>
<reference key="81">
    <citation type="journal article" date="2020" name="J. Clin. Invest.">
        <title>Distinct interferon signatures and cytokine patterns define additional systemic autoinflammatory diseases.</title>
        <authorList>
            <person name="de Jesus A.A."/>
            <person name="Hou Y."/>
            <person name="Brooks S."/>
            <person name="Malle L."/>
            <person name="Biancotto A."/>
            <person name="Huang Y."/>
            <person name="Calvo K.R."/>
            <person name="Marrero B."/>
            <person name="Moir S."/>
            <person name="Oler A.J."/>
            <person name="Deng Z."/>
            <person name="Montealegre Sanchez G.A."/>
            <person name="Ahmed A."/>
            <person name="Allenspach E."/>
            <person name="Arabshahi B."/>
            <person name="Behrens E."/>
            <person name="Benseler S."/>
            <person name="Bezrodnik L."/>
            <person name="Bout-Tabaku S."/>
            <person name="Brescia A.C."/>
            <person name="Brown D."/>
            <person name="Burnham J.M."/>
            <person name="Caldirola M.S."/>
            <person name="Carrasco R."/>
            <person name="Chan A.Y."/>
            <person name="Cimaz R."/>
            <person name="Dancey P."/>
            <person name="Dare J."/>
            <person name="DeGuzman M."/>
            <person name="Dimitriades V."/>
            <person name="Ferguson I."/>
            <person name="Ferguson P."/>
            <person name="Finn L."/>
            <person name="Gattorno M."/>
            <person name="Grom A.A."/>
            <person name="Hanson E.P."/>
            <person name="Hashkes P.J."/>
            <person name="Hedrich C.M."/>
            <person name="Herzog R."/>
            <person name="Horneff G."/>
            <person name="Jerath R."/>
            <person name="Kessler E."/>
            <person name="Kim H."/>
            <person name="Kingsbury D.J."/>
            <person name="Laxer R.M."/>
            <person name="Lee P.Y."/>
            <person name="Lee-Kirsch M.A."/>
            <person name="Lewandowski L."/>
            <person name="Li S."/>
            <person name="Lilleby V."/>
            <person name="Mammadova V."/>
            <person name="Moorthy L.N."/>
            <person name="Nasrullayeva G."/>
            <person name="O'Neil K.M."/>
            <person name="Onel K."/>
            <person name="Ozen S."/>
            <person name="Pan N."/>
            <person name="Pillet P."/>
            <person name="Piotto D.G."/>
            <person name="Punaro M.G."/>
            <person name="Reiff A."/>
            <person name="Reinhardt A."/>
            <person name="Rider L.G."/>
            <person name="Rivas-Chacon R."/>
            <person name="Ronis T."/>
            <person name="Roesen-Wolff A."/>
            <person name="Roth J."/>
            <person name="Ruth N.M."/>
            <person name="Rygg M."/>
            <person name="Schmeling H."/>
            <person name="Schulert G."/>
            <person name="Scott C."/>
            <person name="Seminario G."/>
            <person name="Shulman A."/>
            <person name="Sivaraman V."/>
            <person name="Son M.B."/>
            <person name="Stepanovskiy Y."/>
            <person name="Stringer E."/>
            <person name="Taber S."/>
            <person name="Terreri M.T."/>
            <person name="Tifft C."/>
            <person name="Torgerson T."/>
            <person name="Tosi L."/>
            <person name="Van Royen-Kerkhof A."/>
            <person name="Wampler Muskardin T."/>
            <person name="Canna S.W."/>
            <person name="Goldbach-Mansky R."/>
        </authorList>
    </citation>
    <scope>INVOLVEMENT IN SAIDX</scope>
</reference>
<reference key="82">
    <citation type="journal article" date="2022" name="J. Clin. Invest.">
        <title>Genetically programmed alternative splicing of NEMO mediates an autoinflammatory disease phenotype.</title>
        <authorList>
            <person name="Lee Y."/>
            <person name="Wessel A.W."/>
            <person name="Xu J."/>
            <person name="Reinke J.G."/>
            <person name="Lee E."/>
            <person name="Kim S.M."/>
            <person name="Hsu A.P."/>
            <person name="Zilberman-Rudenko J."/>
            <person name="Cao S."/>
            <person name="Enos C."/>
            <person name="Brooks S.R."/>
            <person name="Deng Z."/>
            <person name="Lin B."/>
            <person name="de Jesus A.A."/>
            <person name="Hupalo D.N."/>
            <person name="Piotto D.G."/>
            <person name="Terreri M.T."/>
            <person name="Dimitriades V.R."/>
            <person name="Dalgard C.L."/>
            <person name="Holland S.M."/>
            <person name="Goldbach-Mansky R."/>
            <person name="Siegel R.M."/>
            <person name="Hanson E.P."/>
        </authorList>
    </citation>
    <scope>INVOLVEMENT IN SAIDX</scope>
</reference>
<reference key="83">
    <citation type="journal article" date="2006" name="J. Exp. Med.">
        <title>X-linked susceptibility to mycobacteria is caused by mutations in NEMO impairing CD40-dependent IL-12 production.</title>
        <authorList>
            <person name="Filipe-Santos O."/>
            <person name="Bustamante J."/>
            <person name="Haverkamp M.H."/>
            <person name="Vinolo E."/>
            <person name="Ku C.-L."/>
            <person name="Puel A."/>
            <person name="Frucht D.M."/>
            <person name="Christel K."/>
            <person name="von Bernuth H."/>
            <person name="Jouanguy E."/>
            <person name="Feinberg J."/>
            <person name="Durandy A."/>
            <person name="Senechal B."/>
            <person name="Chapgier A."/>
            <person name="Vogt G."/>
            <person name="de Beaucoudrey L."/>
            <person name="Fieschi C."/>
            <person name="Picard C."/>
            <person name="Garfa M."/>
            <person name="Chemli J."/>
            <person name="Bejaoui M."/>
            <person name="Tsolia M.N."/>
            <person name="Kutukculer N."/>
            <person name="Plebani A."/>
            <person name="Notarangelo L."/>
            <person name="Bodemer C."/>
            <person name="Geissmann F."/>
            <person name="Israeel A."/>
            <person name="Veron M."/>
            <person name="Knackstedt M."/>
            <person name="Barbouche R."/>
            <person name="Abel L."/>
            <person name="Magdorf K."/>
            <person name="Gendrel D."/>
            <person name="Agou F."/>
            <person name="Holland S.M."/>
            <person name="Casanova J.-L."/>
        </authorList>
    </citation>
    <scope>VARIANTS IMD33 ALA-315 AND GLN-319</scope>
</reference>
<reference key="84">
    <citation type="journal article" date="2007" name="Hum. Mol. Genet.">
        <title>Identification of TRAF6-dependent NEMO polyubiquitination sites through analysis of a new NEMO mutation causing incontinentia pigmenti.</title>
        <authorList>
            <person name="Sebban-Benin H."/>
            <person name="Pescatore A."/>
            <person name="Fusco F."/>
            <person name="Pascuale V."/>
            <person name="Gautheron J."/>
            <person name="Yamaoka S."/>
            <person name="Moncla A."/>
            <person name="Ursini M.V."/>
            <person name="Courtois G."/>
        </authorList>
    </citation>
    <scope>VARIANT IP PRO-323</scope>
    <scope>CHARACTERIZATION OF VARIANT IP PRO-323</scope>
    <scope>INTERACTION WITH TRAF6</scope>
</reference>
<reference key="85">
    <citation type="journal article" date="2010" name="J. Formos. Med. Assoc.">
        <title>NEMO gene mutations in Chinese patients with incontinentia pigmenti.</title>
        <authorList>
            <person name="Hsiao P.F."/>
            <person name="Lin S.P."/>
            <person name="Chiang S.S."/>
            <person name="Wu Y.H."/>
            <person name="Chen H.C."/>
            <person name="Lin Y.C."/>
        </authorList>
    </citation>
    <scope>VARIANT IP HIS-183</scope>
</reference>
<reference key="86">
    <citation type="journal article" date="2014" name="Hum. Mutat.">
        <title>Insight into IKBKG/NEMO locus: report of new mutations and complex genomic rearrangements leading to incontinentia pigmenti disease.</title>
        <authorList>
            <person name="Conte M.I."/>
            <person name="Pescatore A."/>
            <person name="Paciolla M."/>
            <person name="Esposito E."/>
            <person name="Miano M.G."/>
            <person name="Lioi M.B."/>
            <person name="McAleer M.A."/>
            <person name="Giardino G."/>
            <person name="Pignata C."/>
            <person name="Irvine A.D."/>
            <person name="Scheuerle A.E."/>
            <person name="Royer G."/>
            <person name="Hadj-Rabia S."/>
            <person name="Bodemer C."/>
            <person name="Bonnefont J.P."/>
            <person name="Munnich A."/>
            <person name="Smahi A."/>
            <person name="Steffann J."/>
            <person name="Fusco F."/>
            <person name="Ursini M.V."/>
        </authorList>
    </citation>
    <scope>VARIANTS IP PRO-170; GLN-173; PRO-314; PRO-322 AND TYR-413</scope>
</reference>
<reference key="87">
    <citation type="journal article" date="2007" name="J. Med. Genet.">
        <title>IRAK4 and NEMO mutations in otherwise healthy children with recurrent invasive pneumococcal disease.</title>
        <authorList>
            <person name="Ku C.-L."/>
            <person name="Picard C."/>
            <person name="Erdos M."/>
            <person name="Jeurissen A."/>
            <person name="Bustamante J."/>
            <person name="Puel A."/>
            <person name="von Bernuth H."/>
            <person name="Filipe-Santos O."/>
            <person name="Chang H.-H."/>
            <person name="Lawrence T."/>
            <person name="Raes M."/>
            <person name="Marodi L."/>
            <person name="Bossuyt X."/>
            <person name="Casanova J.-L."/>
        </authorList>
    </citation>
    <scope>VARIANT IMD33 GLY-173</scope>
</reference>
<evidence type="ECO:0000250" key="1">
    <source>
        <dbReference type="UniProtKB" id="O88522"/>
    </source>
</evidence>
<evidence type="ECO:0000255" key="2"/>
<evidence type="ECO:0000255" key="3">
    <source>
        <dbReference type="PROSITE-ProRule" id="PRU01142"/>
    </source>
</evidence>
<evidence type="ECO:0000256" key="4">
    <source>
        <dbReference type="SAM" id="MobiDB-lite"/>
    </source>
</evidence>
<evidence type="ECO:0000269" key="5">
    <source>
    </source>
</evidence>
<evidence type="ECO:0000269" key="6">
    <source>
    </source>
</evidence>
<evidence type="ECO:0000269" key="7">
    <source>
    </source>
</evidence>
<evidence type="ECO:0000269" key="8">
    <source>
    </source>
</evidence>
<evidence type="ECO:0000269" key="9">
    <source>
    </source>
</evidence>
<evidence type="ECO:0000269" key="10">
    <source>
    </source>
</evidence>
<evidence type="ECO:0000269" key="11">
    <source>
    </source>
</evidence>
<evidence type="ECO:0000269" key="12">
    <source>
    </source>
</evidence>
<evidence type="ECO:0000269" key="13">
    <source>
    </source>
</evidence>
<evidence type="ECO:0000269" key="14">
    <source>
    </source>
</evidence>
<evidence type="ECO:0000269" key="15">
    <source>
    </source>
</evidence>
<evidence type="ECO:0000269" key="16">
    <source>
    </source>
</evidence>
<evidence type="ECO:0000269" key="17">
    <source>
    </source>
</evidence>
<evidence type="ECO:0000269" key="18">
    <source>
    </source>
</evidence>
<evidence type="ECO:0000269" key="19">
    <source>
    </source>
</evidence>
<evidence type="ECO:0000269" key="20">
    <source>
    </source>
</evidence>
<evidence type="ECO:0000269" key="21">
    <source>
    </source>
</evidence>
<evidence type="ECO:0000269" key="22">
    <source>
    </source>
</evidence>
<evidence type="ECO:0000269" key="23">
    <source>
    </source>
</evidence>
<evidence type="ECO:0000269" key="24">
    <source>
    </source>
</evidence>
<evidence type="ECO:0000269" key="25">
    <source>
    </source>
</evidence>
<evidence type="ECO:0000269" key="26">
    <source>
    </source>
</evidence>
<evidence type="ECO:0000269" key="27">
    <source>
    </source>
</evidence>
<evidence type="ECO:0000269" key="28">
    <source>
    </source>
</evidence>
<evidence type="ECO:0000269" key="29">
    <source>
    </source>
</evidence>
<evidence type="ECO:0000269" key="30">
    <source>
    </source>
</evidence>
<evidence type="ECO:0000269" key="31">
    <source>
    </source>
</evidence>
<evidence type="ECO:0000269" key="32">
    <source>
    </source>
</evidence>
<evidence type="ECO:0000269" key="33">
    <source>
    </source>
</evidence>
<evidence type="ECO:0000269" key="34">
    <source>
    </source>
</evidence>
<evidence type="ECO:0000269" key="35">
    <source>
    </source>
</evidence>
<evidence type="ECO:0000269" key="36">
    <source>
    </source>
</evidence>
<evidence type="ECO:0000269" key="37">
    <source>
    </source>
</evidence>
<evidence type="ECO:0000269" key="38">
    <source>
    </source>
</evidence>
<evidence type="ECO:0000269" key="39">
    <source>
    </source>
</evidence>
<evidence type="ECO:0000269" key="40">
    <source>
    </source>
</evidence>
<evidence type="ECO:0000269" key="41">
    <source>
    </source>
</evidence>
<evidence type="ECO:0000269" key="42">
    <source>
    </source>
</evidence>
<evidence type="ECO:0000269" key="43">
    <source>
    </source>
</evidence>
<evidence type="ECO:0000269" key="44">
    <source>
    </source>
</evidence>
<evidence type="ECO:0000269" key="45">
    <source>
    </source>
</evidence>
<evidence type="ECO:0000269" key="46">
    <source>
    </source>
</evidence>
<evidence type="ECO:0000269" key="47">
    <source>
    </source>
</evidence>
<evidence type="ECO:0000269" key="48">
    <source>
    </source>
</evidence>
<evidence type="ECO:0000269" key="49">
    <source>
    </source>
</evidence>
<evidence type="ECO:0000269" key="50">
    <source>
    </source>
</evidence>
<evidence type="ECO:0000269" key="51">
    <source>
    </source>
</evidence>
<evidence type="ECO:0000269" key="52">
    <source>
    </source>
</evidence>
<evidence type="ECO:0000269" key="53">
    <source>
    </source>
</evidence>
<evidence type="ECO:0000269" key="54">
    <source>
    </source>
</evidence>
<evidence type="ECO:0000269" key="55">
    <source>
    </source>
</evidence>
<evidence type="ECO:0000269" key="56">
    <source>
    </source>
</evidence>
<evidence type="ECO:0000269" key="57">
    <source>
    </source>
</evidence>
<evidence type="ECO:0000269" key="58">
    <source>
    </source>
</evidence>
<evidence type="ECO:0000269" key="59">
    <source>
    </source>
</evidence>
<evidence type="ECO:0000269" key="60">
    <source>
    </source>
</evidence>
<evidence type="ECO:0000269" key="61">
    <source>
    </source>
</evidence>
<evidence type="ECO:0000269" key="62">
    <source>
    </source>
</evidence>
<evidence type="ECO:0000269" key="63">
    <source>
    </source>
</evidence>
<evidence type="ECO:0000269" key="64">
    <source>
    </source>
</evidence>
<evidence type="ECO:0000269" key="65">
    <source>
    </source>
</evidence>
<evidence type="ECO:0000269" key="66">
    <source>
    </source>
</evidence>
<evidence type="ECO:0000269" key="67">
    <source>
    </source>
</evidence>
<evidence type="ECO:0000269" key="68">
    <source>
    </source>
</evidence>
<evidence type="ECO:0000269" key="69">
    <source>
    </source>
</evidence>
<evidence type="ECO:0000269" key="70">
    <source>
    </source>
</evidence>
<evidence type="ECO:0000269" key="71">
    <source>
    </source>
</evidence>
<evidence type="ECO:0000269" key="72">
    <source>
    </source>
</evidence>
<evidence type="ECO:0000303" key="73">
    <source>
    </source>
</evidence>
<evidence type="ECO:0000303" key="74">
    <source ref="6"/>
</evidence>
<evidence type="ECO:0000305" key="75"/>
<evidence type="ECO:0000312" key="76">
    <source>
        <dbReference type="HGNC" id="HGNC:5961"/>
    </source>
</evidence>
<evidence type="ECO:0007744" key="77">
    <source>
    </source>
</evidence>
<evidence type="ECO:0007829" key="78">
    <source>
        <dbReference type="PDB" id="2JVX"/>
    </source>
</evidence>
<evidence type="ECO:0007829" key="79">
    <source>
        <dbReference type="PDB" id="2JVY"/>
    </source>
</evidence>
<evidence type="ECO:0007829" key="80">
    <source>
        <dbReference type="PDB" id="3CL3"/>
    </source>
</evidence>
<evidence type="ECO:0007829" key="81">
    <source>
        <dbReference type="PDB" id="4BWN"/>
    </source>
</evidence>
<evidence type="ECO:0007829" key="82">
    <source>
        <dbReference type="PDB" id="5AAY"/>
    </source>
</evidence>
<evidence type="ECO:0007829" key="83">
    <source>
        <dbReference type="PDB" id="6MI3"/>
    </source>
</evidence>
<proteinExistence type="evidence at protein level"/>
<sequence>MNRHLWKSQLCEMVQPSGGPAADQDVLGEESPLGKPAMLHLPSEQGAPETLQRCLEENQELRDAIRQSNQILRERCEELLHFQASQREEKEFLMCKFQEARKLVERLGLEKLDLKRQKEQALREVEHLKRCQQQMAEDKASVKAQVTSLLGELQESQSRLEAATKECQALEGRARAASEQARQLESEREALQQQHSVQVDQLRMQGQSVEAALRMERQAASEEKRKLAQLQVAYHQLFQEYDNHIKSSVVGSERKRGMQLEDLKQQLQQAEEALVAKQEVIDKLKEEAEQHKIVMETVPVLKAQADIYKADFQAERQAREKLAEKKELLQEQLEQLQREYSKLKASCQESARIEDMRKRHVEVSQAPLPPAPAYLSSPLALPSQRRSPPEEPPDFCCPKCQYQAPDMDTLQIHVMECIE</sequence>
<gene>
    <name evidence="76" type="primary">IKBKG</name>
    <name type="synonym">FIP3</name>
    <name type="synonym">NEMO</name>
</gene>
<comment type="function">
    <text evidence="21 30 38 41 43 44 48 51 52 65 69 71">Regulatory subunit of the IKK core complex which phosphorylates inhibitors of NF-kappa-B thus leading to the dissociation of the inhibitor/NF-kappa-B complex and ultimately the degradation of the inhibitor (PubMed:14695475, PubMed:20724660, PubMed:21518757, PubMed:9751060). Its binding to scaffolding polyubiquitin plays a key role in IKK activation by multiple signaling receptor pathways (PubMed:16547522, PubMed:18287044, PubMed:19033441, PubMed:19185524, PubMed:21606507, PubMed:27777308, PubMed:33567255). Can recognize and bind both 'Lys-63'-linked and linear polyubiquitin upon cell stimulation, with a much higher affinity for linear polyubiquitin (PubMed:16547522, PubMed:18287044, PubMed:19033441, PubMed:19185524, PubMed:21606507, PubMed:27777308). Could be implicated in NF-kappa-B-mediated protection from cytokine toxicity. Essential for viral activation of IRF3 (PubMed:19854139). Involved in TLR3- and IFIH1-mediated antiviral innate response; this function requires 'Lys-27'-linked polyubiquitination (PubMed:20724660).</text>
</comment>
<comment type="function">
    <text evidence="5 8">(Microbial infection) Also considered to be a mediator for HTLV-1 Tax oncoprotein activation of NF-kappa-B.</text>
</comment>
<comment type="subunit">
    <text evidence="1 9 12 13 15 17 19 22 26 28 29 30 34 35 36 37 38 40 41 43 52 53 54 55 60 61 62 63 64 65 68 71 72">Homodimer; disulfide-linked (PubMed:18164680). Component of the I-kappa-B-kinase (IKK) core complex consisting of CHUK, IKBKB and IKBKG; probably four alpha/CHUK-beta/IKBKB dimers are associated with four gamma/IKBKG subunits (PubMed:11080499, PubMed:17977820, PubMed:18462684, PubMed:32935379, PubMed:9751060, PubMed:9891086). The IKK core complex seems to associate with regulatory or adapter proteins to form a IKK-signalosome holo-complex (PubMed:11080499, PubMed:9751060, PubMed:9891086). The IKK complex associates with TERF2IP/RAP1, leading to promote IKK-mediated phosphorylation of RELA/p65 (By similarity). Part of a complex composed of NCOA2, NCOA3, CHUK/IKKA, IKBKB, IKBKG and CREBBP (PubMed:11971985). Interacts with COPS3, CYLD, NALP2, TRPC4AP and PIDD1 (PubMed:11418127, PubMed:12917691, PubMed:15456791, PubMed:16360037). Interacts with ATM; the complex is exported from the nucleus (PubMed:16497931). Interacts with TRAF6 (PubMed:17728323). Interacts with IKBKE (PubMed:23453969). Interacts with TANK; the interaction is enhanced by IKBKE and TBK1 (PubMed:12133833). Part of a ternary complex consisting of TANK, IKBKB and IKBKG (PubMed:12133833). Interacts with ZFAND5 (PubMed:14754897). Interacts with RIPK2 (PubMed:18079694). Interacts with TNIP1 and TNFAIP3; TNIP1 facilitates the TNFAIP3-mediated de-ubiquitination of IKBKG (PubMed:11389905, PubMed:22099304). Interacts with TNFAIP3; the interaction is induced by TNF stimulation and by polyubiquitin (PubMed:11389905, PubMed:22099304). Binds (via UBAN region) polyubiquitin; binds both 'Lys-63'-linked and linear polyubiquitin, with higher affinity for linear ubiquitin (PubMed:16547522, PubMed:19033441, PubMed:19185524, PubMed:21606507). Interacts with NLRP10 (PubMed:22672233). Interacts with TANK; this interaction increases in response to DNA damage (PubMed:25861989). Interacts with USP10; this interaction increases in response to DNA damage (PubMed:25861989). Interacts with ZC3H12A; this interaction increases in response to DNA damage (PubMed:25861989). Interacts with IFIT5; the interaction synergizes the recruitment of IKK to MAP3K7 and enhances IKK phosphorylation (PubMed:26334375). Interacts with TRIM29; this interaction induces IKBKG/NEMO ubiquitination and proteolytic degradation (PubMed:27695001). Interacts with TRIM13; this interaction leads to IKBKG/NEMO ubiquitination (PubMed:25152375). Interacts with ARFIP2 (PubMed:26296658). Interacts with RIPK1 (By similarity). Interacts with (ubiquitinated) BCL10; interaction with polyubiquitinated BCL10 via both 'Lys-63'-linked and linear ubiquitin is required for TCR-induced NF-kappa-B activation (PubMed:18287044, PubMed:27777308). Interacts with MARCHF2; during the late stages of macrophage viral and bacterial infection; the interaction leads to ubiquitination and degradation of IKBKG/NEMO (PubMed:32935379).</text>
</comment>
<comment type="subunit">
    <text evidence="66">(Microbial infection) Interacts with Molluscum contagiosum virus protein MC005; this interaction inhibits NF-kappa-B activation.</text>
</comment>
<comment type="subunit">
    <text evidence="5 8">(Microbial infection) Interacts with HTLV-1 Tax oncoprotein; the interaction activates IKBKG.</text>
</comment>
<comment type="subunit">
    <text evidence="46">(Microbial infection) Interacts with Shigella flexneri ipah9.8; the interaction promotes TNIP1-dependent 'Lys-27'-linked polyubiquitination of IKBKG which perturbs NF-kappa-B activation during bacterial infection.</text>
</comment>
<comment type="subunit">
    <text evidence="69">(Microbial infection) Interacts with SARS coronavirus-2/SARS-CoV-2 virus protein ORF9B (via N-terminus); the interaction inhibits polyubiquitination through 'Lys-63' and NF-kappa-B activation.</text>
</comment>
<comment type="interaction">
    <interactant intactId="EBI-81279">
        <id>Q9Y6K9</id>
    </interactant>
    <interactant intactId="EBI-718895">
        <id>Q9NPF8</id>
        <label>ADAP2</label>
    </interactant>
    <organismsDiffer>false</organismsDiffer>
    <experiments>2</experiments>
</comment>
<comment type="interaction">
    <interactant intactId="EBI-81279">
        <id>Q9Y6K9</id>
    </interactant>
    <interactant intactId="EBI-2511319">
        <id>Q4VCS5</id>
        <label>AMOT</label>
    </interactant>
    <organismsDiffer>false</organismsDiffer>
    <experiments>3</experiments>
</comment>
<comment type="interaction">
    <interactant intactId="EBI-81279">
        <id>Q9Y6K9</id>
    </interactant>
    <interactant intactId="EBI-354007">
        <id>P04083</id>
        <label>ANXA1</label>
    </interactant>
    <organismsDiffer>false</organismsDiffer>
    <experiments>6</experiments>
</comment>
<comment type="interaction">
    <interactant intactId="EBI-81279">
        <id>Q9Y6K9</id>
    </interactant>
    <interactant intactId="EBI-2683099">
        <id>Q66PJ3</id>
        <label>ARL6IP4</label>
    </interactant>
    <organismsDiffer>false</organismsDiffer>
    <experiments>2</experiments>
</comment>
<comment type="interaction">
    <interactant intactId="EBI-81279">
        <id>Q9Y6K9</id>
    </interactant>
    <interactant intactId="EBI-495465">
        <id>Q13315</id>
        <label>ATM</label>
    </interactant>
    <organismsDiffer>false</organismsDiffer>
    <experiments>4</experiments>
</comment>
<comment type="interaction">
    <interactant intactId="EBI-81279">
        <id>Q9Y6K9</id>
    </interactant>
    <interactant intactId="EBI-968983">
        <id>Q13535</id>
        <label>ATR</label>
    </interactant>
    <organismsDiffer>false</organismsDiffer>
    <experiments>2</experiments>
</comment>
<comment type="interaction">
    <interactant intactId="EBI-81279">
        <id>Q9Y6K9</id>
    </interactant>
    <interactant intactId="EBI-958922">
        <id>O95999</id>
        <label>BCL10</label>
    </interactant>
    <organismsDiffer>false</organismsDiffer>
    <experiments>7</experiments>
</comment>
<comment type="interaction">
    <interactant intactId="EBI-81279">
        <id>Q9Y6K9</id>
    </interactant>
    <interactant intactId="EBI-4286943">
        <id>P05937</id>
        <label>CALB1</label>
    </interactant>
    <organismsDiffer>false</organismsDiffer>
    <experiments>3</experiments>
</comment>
<comment type="interaction">
    <interactant intactId="EBI-81279">
        <id>Q9Y6K9</id>
    </interactant>
    <interactant intactId="EBI-295634">
        <id>Q16543</id>
        <label>CDC37</label>
    </interactant>
    <organismsDiffer>false</organismsDiffer>
    <experiments>9</experiments>
</comment>
<comment type="interaction">
    <interactant intactId="EBI-81279">
        <id>Q9Y6K9</id>
    </interactant>
    <interactant intactId="EBI-375096">
        <id>P24941</id>
        <label>CDK2</label>
    </interactant>
    <organismsDiffer>false</organismsDiffer>
    <experiments>4</experiments>
</comment>
<comment type="interaction">
    <interactant intactId="EBI-81279">
        <id>Q9Y6K9</id>
    </interactant>
    <interactant intactId="EBI-81249">
        <id>O15111</id>
        <label>CHUK</label>
    </interactant>
    <organismsDiffer>false</organismsDiffer>
    <experiments>30</experiments>
</comment>
<comment type="interaction">
    <interactant intactId="EBI-81279">
        <id>Q9Y6K9</id>
    </interactant>
    <interactant intactId="EBI-350590">
        <id>Q9UNS2</id>
        <label>COPS3</label>
    </interactant>
    <organismsDiffer>false</organismsDiffer>
    <experiments>2</experiments>
</comment>
<comment type="interaction">
    <interactant intactId="EBI-81279">
        <id>Q9Y6K9</id>
    </interactant>
    <interactant intactId="EBI-5453285">
        <id>Q2TBE0</id>
        <label>CWF19L2</label>
    </interactant>
    <organismsDiffer>false</organismsDiffer>
    <experiments>3</experiments>
</comment>
<comment type="interaction">
    <interactant intactId="EBI-81279">
        <id>Q9Y6K9</id>
    </interactant>
    <interactant intactId="EBI-744099">
        <id>Q9H0I2</id>
        <label>ENKD1</label>
    </interactant>
    <organismsDiffer>false</organismsDiffer>
    <experiments>3</experiments>
</comment>
<comment type="interaction">
    <interactant intactId="EBI-81279">
        <id>Q9Y6K9</id>
    </interactant>
    <interactant intactId="EBI-3946257">
        <id>P36888</id>
        <label>FLT3</label>
    </interactant>
    <organismsDiffer>false</organismsDiffer>
    <experiments>2</experiments>
</comment>
<comment type="interaction">
    <interactant intactId="EBI-81279">
        <id>Q9Y6K9</id>
    </interactant>
    <interactant intactId="EBI-1046878">
        <id>Q14161</id>
        <label>GIT2</label>
    </interactant>
    <organismsDiffer>false</organismsDiffer>
    <experiments>6</experiments>
</comment>
<comment type="interaction">
    <interactant intactId="EBI-81279">
        <id>Q9Y6K9</id>
    </interactant>
    <interactant intactId="EBI-746309">
        <id>Q92917</id>
        <label>GPKOW</label>
    </interactant>
    <organismsDiffer>false</organismsDiffer>
    <experiments>3</experiments>
</comment>
<comment type="interaction">
    <interactant intactId="EBI-81279">
        <id>Q9Y6K9</id>
    </interactant>
    <interactant intactId="EBI-6163836">
        <id>Q7Z4H3</id>
        <label>HDDC2</label>
    </interactant>
    <organismsDiffer>false</organismsDiffer>
    <experiments>3</experiments>
</comment>
<comment type="interaction">
    <interactant intactId="EBI-81279">
        <id>Q9Y6K9</id>
    </interactant>
    <interactant intactId="EBI-296047">
        <id>P07900</id>
        <label>HSP90AA1</label>
    </interactant>
    <organismsDiffer>false</organismsDiffer>
    <experiments>4</experiments>
</comment>
<comment type="interaction">
    <interactant intactId="EBI-81279">
        <id>Q9Y6K9</id>
    </interactant>
    <interactant intactId="EBI-352572">
        <id>P08238</id>
        <label>HSP90AB1</label>
    </interactant>
    <organismsDiffer>false</organismsDiffer>
    <experiments>4</experiments>
</comment>
<comment type="interaction">
    <interactant intactId="EBI-81279">
        <id>Q9Y6K9</id>
    </interactant>
    <interactant intactId="EBI-81266">
        <id>O14920</id>
        <label>IKBKB</label>
    </interactant>
    <organismsDiffer>false</organismsDiffer>
    <experiments>39</experiments>
</comment>
<comment type="interaction">
    <interactant intactId="EBI-81279">
        <id>Q9Y6K9</id>
    </interactant>
    <interactant intactId="EBI-81279">
        <id>Q9Y6K9</id>
        <label>IKBKG</label>
    </interactant>
    <organismsDiffer>false</organismsDiffer>
    <experiments>8</experiments>
</comment>
<comment type="interaction">
    <interactant intactId="EBI-81279">
        <id>Q9Y6K9</id>
    </interactant>
    <interactant intactId="EBI-297888">
        <id>P05783</id>
        <label>KRT18</label>
    </interactant>
    <organismsDiffer>false</organismsDiffer>
    <experiments>3</experiments>
</comment>
<comment type="interaction">
    <interactant intactId="EBI-81279">
        <id>Q9Y6K9</id>
    </interactant>
    <interactant intactId="EBI-297852">
        <id>P05787</id>
        <label>KRT8</label>
    </interactant>
    <organismsDiffer>false</organismsDiffer>
    <experiments>2</experiments>
</comment>
<comment type="interaction">
    <interactant intactId="EBI-81279">
        <id>Q9Y6K9</id>
    </interactant>
    <interactant intactId="EBI-739546">
        <id>Q96PV6</id>
        <label>LENG8</label>
    </interactant>
    <organismsDiffer>false</organismsDiffer>
    <experiments>3</experiments>
</comment>
<comment type="interaction">
    <interactant intactId="EBI-81279">
        <id>Q9Y6K9</id>
    </interactant>
    <interactant intactId="EBI-1047372">
        <id>Q9UDY8</id>
        <label>MALT1</label>
    </interactant>
    <organismsDiffer>false</organismsDiffer>
    <experiments>4</experiments>
</comment>
<comment type="interaction">
    <interactant intactId="EBI-81279">
        <id>Q9Y6K9</id>
    </interactant>
    <interactant intactId="EBI-358011">
        <id>Q99558</id>
        <label>MAP3K14</label>
    </interactant>
    <organismsDiffer>false</organismsDiffer>
    <experiments>5</experiments>
</comment>
<comment type="interaction">
    <interactant intactId="EBI-81279">
        <id>Q9Y6K9</id>
    </interactant>
    <interactant intactId="EBI-447544">
        <id>P01106</id>
        <label>MYC</label>
    </interactant>
    <organismsDiffer>false</organismsDiffer>
    <experiments>3</experiments>
</comment>
<comment type="interaction">
    <interactant intactId="EBI-81279">
        <id>Q9Y6K9</id>
    </interactant>
    <interactant intactId="EBI-307386">
        <id>P25963</id>
        <label>NFKBIA</label>
    </interactant>
    <organismsDiffer>false</organismsDiffer>
    <experiments>6</experiments>
</comment>
<comment type="interaction">
    <interactant intactId="EBI-81279">
        <id>Q9Y6K9</id>
    </interactant>
    <interactant intactId="EBI-352889">
        <id>Q15653</id>
        <label>NFKBIB</label>
    </interactant>
    <organismsDiffer>false</organismsDiffer>
    <experiments>2</experiments>
</comment>
<comment type="interaction">
    <interactant intactId="EBI-81279">
        <id>Q9Y6K9</id>
    </interactant>
    <interactant intactId="EBI-9057006">
        <id>Q9UJX0</id>
        <label>OSGIN1</label>
    </interactant>
    <organismsDiffer>false</organismsDiffer>
    <experiments>3</experiments>
</comment>
<comment type="interaction">
    <interactant intactId="EBI-81279">
        <id>Q9Y6K9</id>
    </interactant>
    <interactant intactId="EBI-712311">
        <id>P67775</id>
        <label>PPP2CA</label>
    </interactant>
    <organismsDiffer>false</organismsDiffer>
    <experiments>4</experiments>
</comment>
<comment type="interaction">
    <interactant intactId="EBI-81279">
        <id>Q9Y6K9</id>
    </interactant>
    <interactant intactId="EBI-2798416">
        <id>Q99633</id>
        <label>PRPF18</label>
    </interactant>
    <organismsDiffer>false</organismsDiffer>
    <experiments>3</experiments>
</comment>
<comment type="interaction">
    <interactant intactId="EBI-81279">
        <id>Q9Y6K9</id>
    </interactant>
    <interactant intactId="EBI-357828">
        <id>P28074</id>
        <label>PSMB5</label>
    </interactant>
    <organismsDiffer>false</organismsDiffer>
    <experiments>3</experiments>
</comment>
<comment type="interaction">
    <interactant intactId="EBI-81279">
        <id>Q9Y6K9</id>
    </interactant>
    <interactant intactId="EBI-2340624">
        <id>Q9BYM8</id>
        <label>RBCK1</label>
    </interactant>
    <organismsDiffer>false</organismsDiffer>
    <experiments>9</experiments>
</comment>
<comment type="interaction">
    <interactant intactId="EBI-81279">
        <id>Q9Y6K9</id>
    </interactant>
    <interactant intactId="EBI-358507">
        <id>Q13546</id>
        <label>RIPK1</label>
    </interactant>
    <organismsDiffer>false</organismsDiffer>
    <experiments>8</experiments>
</comment>
<comment type="interaction">
    <interactant intactId="EBI-81279">
        <id>Q9Y6K9</id>
    </interactant>
    <interactant intactId="EBI-948111">
        <id>Q96EP0</id>
        <label>RNF31</label>
    </interactant>
    <organismsDiffer>false</organismsDiffer>
    <experiments>10</experiments>
</comment>
<comment type="interaction">
    <interactant intactId="EBI-81279">
        <id>Q9Y6K9</id>
    </interactant>
    <interactant intactId="EBI-398632">
        <id>Q9UBF6</id>
        <label>RNF7</label>
    </interactant>
    <organismsDiffer>false</organismsDiffer>
    <experiments>3</experiments>
</comment>
<comment type="interaction">
    <interactant intactId="EBI-81279">
        <id>Q9Y6K9</id>
    </interactant>
    <interactant intactId="EBI-6257338">
        <id>Q9BVN2-2</id>
        <label>RUSC1</label>
    </interactant>
    <organismsDiffer>false</organismsDiffer>
    <experiments>4</experiments>
</comment>
<comment type="interaction">
    <interactant intactId="EBI-81279">
        <id>Q9Y6K9</id>
    </interactant>
    <interactant intactId="EBI-714881">
        <id>Q9HC62</id>
        <label>SENP2</label>
    </interactant>
    <organismsDiffer>false</organismsDiffer>
    <experiments>3</experiments>
</comment>
<comment type="interaction">
    <interactant intactId="EBI-81279">
        <id>Q9Y6K9</id>
    </interactant>
    <interactant intactId="EBI-3942966">
        <id>Q9H0F6</id>
        <label>SHARPIN</label>
    </interactant>
    <organismsDiffer>false</organismsDiffer>
    <experiments>14</experiments>
</comment>
<comment type="interaction">
    <interactant intactId="EBI-81279">
        <id>Q9Y6K9</id>
    </interactant>
    <interactant intactId="EBI-750559">
        <id>O95391</id>
        <label>SLU7</label>
    </interactant>
    <organismsDiffer>false</organismsDiffer>
    <experiments>3</experiments>
</comment>
<comment type="interaction">
    <interactant intactId="EBI-81279">
        <id>Q9Y6K9</id>
    </interactant>
    <interactant intactId="EBI-632715">
        <id>Q13573</id>
        <label>SNW1</label>
    </interactant>
    <organismsDiffer>false</organismsDiffer>
    <experiments>4</experiments>
</comment>
<comment type="interaction">
    <interactant intactId="EBI-81279">
        <id>Q9Y6K9</id>
    </interactant>
    <interactant intactId="EBI-307104">
        <id>Q13501</id>
        <label>SQSTM1</label>
    </interactant>
    <organismsDiffer>false</organismsDiffer>
    <experiments>2</experiments>
</comment>
<comment type="interaction">
    <interactant intactId="EBI-81279">
        <id>Q9Y6K9</id>
    </interactant>
    <interactant intactId="EBI-621482">
        <id>P12931</id>
        <label>SRC</label>
    </interactant>
    <organismsDiffer>false</organismsDiffer>
    <experiments>3</experiments>
</comment>
<comment type="interaction">
    <interactant intactId="EBI-81279">
        <id>Q9Y6K9</id>
    </interactant>
    <interactant intactId="EBI-80140">
        <id>P63165</id>
        <label>SUMO1</label>
    </interactant>
    <organismsDiffer>false</organismsDiffer>
    <experiments>3</experiments>
</comment>
<comment type="interaction">
    <interactant intactId="EBI-81279">
        <id>Q9Y6K9</id>
    </interactant>
    <interactant intactId="EBI-524909">
        <id>P21579</id>
        <label>SYT1</label>
    </interactant>
    <organismsDiffer>false</organismsDiffer>
    <experiments>3</experiments>
</comment>
<comment type="interaction">
    <interactant intactId="EBI-81279">
        <id>Q9Y6K9</id>
    </interactant>
    <interactant intactId="EBI-356349">
        <id>Q92844</id>
        <label>TANK</label>
    </interactant>
    <organismsDiffer>false</organismsDiffer>
    <experiments>6</experiments>
</comment>
<comment type="interaction">
    <interactant intactId="EBI-81279">
        <id>Q9Y6K9</id>
    </interactant>
    <interactant intactId="EBI-356402">
        <id>Q9UHD2</id>
        <label>TBK1</label>
    </interactant>
    <organismsDiffer>false</organismsDiffer>
    <experiments>5</experiments>
</comment>
<comment type="interaction">
    <interactant intactId="EBI-81279">
        <id>Q9Y6K9</id>
    </interactant>
    <interactant intactId="EBI-359977">
        <id>P01375</id>
        <label>TNF</label>
    </interactant>
    <organismsDiffer>false</organismsDiffer>
    <experiments>3</experiments>
</comment>
<comment type="interaction">
    <interactant intactId="EBI-81279">
        <id>Q9Y6K9</id>
    </interactant>
    <interactant intactId="EBI-527670">
        <id>P21580</id>
        <label>TNFAIP3</label>
    </interactant>
    <organismsDiffer>false</organismsDiffer>
    <experiments>5</experiments>
</comment>
<comment type="interaction">
    <interactant intactId="EBI-81279">
        <id>Q9Y6K9</id>
    </interactant>
    <interactant intactId="EBI-357849">
        <id>Q15025</id>
        <label>TNIP1</label>
    </interactant>
    <organismsDiffer>false</organismsDiffer>
    <experiments>6</experiments>
</comment>
<comment type="interaction">
    <interactant intactId="EBI-81279">
        <id>Q9Y6K9</id>
    </interactant>
    <interactant intactId="EBI-359372">
        <id>Q8NFZ5</id>
        <label>TNIP2</label>
    </interactant>
    <organismsDiffer>false</organismsDiffer>
    <experiments>8</experiments>
</comment>
<comment type="interaction">
    <interactant intactId="EBI-81279">
        <id>Q9Y6K9</id>
    </interactant>
    <interactant intactId="EBI-3390054">
        <id>P0CG48</id>
        <label>UBC</label>
    </interactant>
    <organismsDiffer>false</organismsDiffer>
    <experiments>4</experiments>
</comment>
<comment type="interaction">
    <interactant intactId="EBI-81279">
        <id>Q9Y6K9</id>
    </interactant>
    <interactant intactId="EBI-745527">
        <id>Q9Y2X8</id>
        <label>UBE2D4</label>
    </interactant>
    <organismsDiffer>false</organismsDiffer>
    <experiments>3</experiments>
</comment>
<comment type="interaction">
    <interactant intactId="EBI-81279">
        <id>Q9Y6K9</id>
    </interactant>
    <interactant intactId="EBI-747793">
        <id>Q5D1E8</id>
        <label>ZC3H12A</label>
    </interactant>
    <organismsDiffer>false</organismsDiffer>
    <experiments>2</experiments>
</comment>
<comment type="interaction">
    <interactant intactId="EBI-81279">
        <id>Q9Y6K9</id>
    </interactant>
    <interactant intactId="EBI-6427977">
        <id>Q96SQ5</id>
        <label>ZNF587</label>
    </interactant>
    <organismsDiffer>false</organismsDiffer>
    <experiments>3</experiments>
</comment>
<comment type="interaction">
    <interactant intactId="EBI-81279">
        <id>Q9Y6K9</id>
    </interactant>
    <interactant intactId="EBI-5667516">
        <id>Q9Y2P0</id>
        <label>ZNF835</label>
    </interactant>
    <organismsDiffer>false</organismsDiffer>
    <experiments>3</experiments>
</comment>
<comment type="interaction">
    <interactant intactId="EBI-81279">
        <id>Q9Y6K9</id>
    </interactant>
    <interactant intactId="EBI-25475909">
        <id>P0DTD2</id>
        <label>9b</label>
    </interactant>
    <organismsDiffer>true</organismsDiffer>
    <experiments>3</experiments>
</comment>
<comment type="interaction">
    <interactant intactId="EBI-81279">
        <id>Q9Y6K9</id>
    </interactant>
    <interactant intactId="EBI-6125799">
        <id>Q8VSC3</id>
        <label>ipaH9.8</label>
    </interactant>
    <organismsDiffer>true</organismsDiffer>
    <experiments>8</experiments>
</comment>
<comment type="interaction">
    <interactant intactId="EBI-81279">
        <id>Q9Y6K9</id>
    </interactant>
    <interactant intactId="EBI-25475920">
        <id>PRO_0000449631</id>
        <label>rep</label>
        <dbReference type="UniProtKB" id="P0DTD1"/>
    </interactant>
    <organismsDiffer>true</organismsDiffer>
    <experiments>3</experiments>
</comment>
<comment type="interaction">
    <interactant intactId="EBI-27121550">
        <id>Q9Y6K9-1</id>
    </interactant>
    <interactant intactId="EBI-25475864">
        <id>PRO_0000449623</id>
        <label>rep</label>
        <dbReference type="UniProtKB" id="P0DTD1"/>
    </interactant>
    <organismsDiffer>true</organismsDiffer>
    <experiments>2</experiments>
</comment>
<comment type="subcellular location">
    <subcellularLocation>
        <location evidence="20 58">Cytoplasm</location>
    </subcellularLocation>
    <subcellularLocation>
        <location evidence="20">Nucleus</location>
    </subcellularLocation>
    <text evidence="20">Sumoylated NEMO accumulates in the nucleus in response to genotoxic stress.</text>
</comment>
<comment type="alternative products">
    <event type="alternative splicing"/>
    <isoform>
        <id>Q9Y6K9-1</id>
        <name>1</name>
        <sequence type="displayed"/>
    </isoform>
    <isoform>
        <id>Q9Y6K9-2</id>
        <name>2</name>
        <sequence type="described" ref="VSP_041000"/>
    </isoform>
    <isoform>
        <id>Q9Y6K9-3</id>
        <name>3</name>
        <sequence type="described" ref="VSP_041001 VSP_041002"/>
    </isoform>
</comment>
<comment type="tissue specificity">
    <text>Heart, brain, placenta, lung, liver, skeletal muscle, kidney and pancreas.</text>
</comment>
<comment type="domain">
    <text evidence="39 44">The leucine-zipper domain and the CCHC NOA-type zinc-fingers constitute the UBAN region and are essential for polyubiquitin binding and for the activation of IRF3.</text>
</comment>
<comment type="PTM">
    <text evidence="35">Phosphorylation at Ser-68 attenuates aminoterminal homodimerization.</text>
</comment>
<comment type="PTM">
    <text evidence="20 21 27 33 42 48 49 51 61 68">Polyubiquitinated on Lys-285 via 'Lys-63'-linked ubiquitin; the ubiquitination is mediated downstream of NOD2 and RIPK2 and probably plays a role in signaling by facilitating interactions with ubiquitin domain-containing proteins and activates the NF-kappa-B pathway (PubMed:15620648, PubMed:17562858, PubMed:19136968). Polyubiquitinated on Lys-285 and Lys-399 through 'Lys-63'-linked ubiquitin; the ubiquitination is mediated by BCL10, MALT1 and TRAF6 and probably plays a role in signaling by facilitating interactions with ubiquitin domain-containing proteins and activates the NF-kappa-B pathway (PubMed:14695475, PubMed:17562858, PubMed:19136968). Monoubiquitinated on Lys-277 and Lys-309; promotes nuclear export (PubMed:14651848). Polyubiquitinated through 'Lys-27' by TRIM23; involved in antiviral innate and inflammatory responses (PubMed:20724660). Linear polyubiquitinated on Lys-111, Lys-143, Lys-226, Lys-246, Lys-264, Lys-277, Lys-285, Lys-292, Lys-302, Lys-309 and Lys-326; the head-to-tail polyubiquitination is mediated by the LUBAC complex and plays a key role in NF-kappa-B activation (PubMed:21455181). Deubiquitinated by USP10 in a TANK-dependent and -independent manner, leading to the negative regulation of NF-kappa-B signaling upon DNA damage (PubMed:25861989). Ubiquitinated at Lys-326 by MARCHF2 following bacterial and viral infection which leads to its degradation (PubMed:32935379). Polyubiquitinated via 'Lys-29'-linked ubiquitin; leading to lysosomal degradation (PubMed:21518757).</text>
</comment>
<comment type="PTM">
    <text evidence="20 29 42 46 49">Sumoylated on Lys-277 and Lys-309 with SUMO1; the modification results in phosphorylation of Ser-85 by ATM leading to a replacement of the sumoylation by mono-ubiquitination on these residues.</text>
</comment>
<comment type="PTM">
    <text evidence="50">Neddylated by TRIM40, resulting in stabilization of NFKBIA and down-regulation of NF-kappa-B activity.</text>
</comment>
<comment type="PTM">
    <text evidence="59">(Microbial infection) Cleaved by hepatitis A virus (HAV) protease 3C allowing the virus to disrupt the host innate immune signaling.</text>
</comment>
<comment type="PTM">
    <text evidence="58">(Microbial infection) Deubiquitinated by Epstein-Barr virus BPLF1 on both 'Lys-48' and 'Lys-63'-linked ubiquitin chains; leading to NF-kappa-B signaling inhibition.</text>
</comment>
<comment type="PTM">
    <text evidence="46">(Microbial infection) Polyubiquitinated on Lys-309 and Lys-321 via 'Lys-27'-linked ubiquitin by Shigella flexneri E3 ubiquitin-protein ligase ipah9.8, leading to its degradation by the proteasome.</text>
</comment>
<comment type="PTM">
    <text evidence="69">(Microbial infection) Polyubiquitination through 'Lys-63' is interrupted by interaction with SARS coronavirus-2/SARS-CoV-2 virus protein ORF9B which inhibits the NF-kappa-B pathway.</text>
</comment>
<comment type="disease" evidence="7 10 11 16 20 23 30 43 52">
    <disease id="DI-00424">
        <name>Ectodermal dysplasia and immunodeficiency 1</name>
        <acronym>EDAID1</acronym>
        <description>A form of ectoderma dysplasia, a heterogeneous group of disorders due to abnormal development of two or more ectodermal structures. EDAID1 is an X-linked recessive disorder characterized by absence of sweat glands, sparse scalp hair, rare conical teeth and immunological abnormalities resulting in severe infectious diseases. Severely affected individuals may also show lymphedema, osteopetrosis, and, rarely, hematologic abnormalities. The phenotype is highly variable, and may be fatal in childhood.</description>
        <dbReference type="MIM" id="300291"/>
    </disease>
    <text>The disease is caused by variants affecting the gene represented in this entry.</text>
</comment>
<comment type="disease" evidence="23 25 31 32 43 45">
    <disease id="DI-02445">
        <name>Immunodeficiency 33</name>
        <acronym>IMD33</acronym>
        <description>An X-linked recessive disorder characterized by variably impaired immunologic function and early-onset recurrent infections, usually due to pneumococcus, H.influenzae, and atypical mycobacteria. Features of hypohidrotic ectodermal dysplasia are generally not present, although some patients may have conical teeth or hypodontia.</description>
        <dbReference type="MIM" id="300636"/>
    </disease>
    <text>Disease susceptibility is associated with variants affecting the gene represented in this entry.</text>
</comment>
<comment type="disease" evidence="6 14 24 34 41 47 57">
    <disease id="DI-00597">
        <name>Incontinentia pigmenti</name>
        <acronym>IP</acronym>
        <description>A genodermatosis usually prenatally lethal in males. In affected females, it causes abnormalities of the skin, hair, eyes, nails, teeth, skeleton, heart, and central nervous system. The prominent skin signs occur in four classic cutaneous stages: perinatal inflammatory vesicles, verrucous patches, a distinctive pattern of hyperpigmentation and dermal scarring.</description>
        <dbReference type="MIM" id="308300"/>
    </disease>
    <text>The disease is caused by variants affecting the gene represented in this entry.</text>
</comment>
<comment type="disease" evidence="67 70">
    <disease id="DI-06411">
        <name>Autoinflammatory disease, systemic, X-linked</name>
        <acronym>SAIDX</acronym>
        <description>An X-linked disorder characterized by systemic autoinflammation appearing in the first months of life. Clinical manifestations are variable, including lymphadenopathy, hepatosplenomegaly, fever, panniculitis, and nodular skin rash. Additional features may include inflammation of the optic nerve, intracranial hemorrhage, and lipodystrophy.</description>
        <dbReference type="MIM" id="301081"/>
    </disease>
    <text>The disease is caused by variants affecting the gene represented in this entry.</text>
</comment>
<comment type="online information" name="Inhibitor of kappa light polypeptide gene enhancer in B-cells, kinase gamma (IKBKG)">
    <link uri="https://databases.lovd.nl/shared/genes/IKBKG"/>
    <text>Leiden Open Variation Database (LOVD)</text>
</comment>
<accession>Q9Y6K9</accession>
<accession>Q7LBY6</accession>
<accession>Q7Z7F1</accession>
<organism>
    <name type="scientific">Homo sapiens</name>
    <name type="common">Human</name>
    <dbReference type="NCBI Taxonomy" id="9606"/>
    <lineage>
        <taxon>Eukaryota</taxon>
        <taxon>Metazoa</taxon>
        <taxon>Chordata</taxon>
        <taxon>Craniata</taxon>
        <taxon>Vertebrata</taxon>
        <taxon>Euteleostomi</taxon>
        <taxon>Mammalia</taxon>
        <taxon>Eutheria</taxon>
        <taxon>Euarchontoglires</taxon>
        <taxon>Primates</taxon>
        <taxon>Haplorrhini</taxon>
        <taxon>Catarrhini</taxon>
        <taxon>Hominidae</taxon>
        <taxon>Homo</taxon>
    </lineage>
</organism>
<feature type="chain" id="PRO_0000096782" description="NF-kappa-B essential modulator">
    <location>
        <begin position="1"/>
        <end position="419"/>
    </location>
</feature>
<feature type="zinc finger region" description="CCHC NOA-type" evidence="3">
    <location>
        <begin position="389"/>
        <end position="419"/>
    </location>
</feature>
<feature type="region of interest" description="Required for interaction with and ubiquitination by MARCHF2" evidence="68">
    <location>
        <begin position="1"/>
        <end position="197"/>
    </location>
</feature>
<feature type="region of interest" description="Interaction with CHUK/IKBKB">
    <location>
        <begin position="44"/>
        <end position="111"/>
    </location>
</feature>
<feature type="region of interest" description="Interaction with TANK">
    <location>
        <begin position="150"/>
        <end position="257"/>
    </location>
</feature>
<feature type="region of interest" description="Ubiquitin-binding (UBAN)">
    <location>
        <begin position="242"/>
        <end position="350"/>
    </location>
</feature>
<feature type="region of interest" description="Self-association">
    <location>
        <begin position="246"/>
        <end position="365"/>
    </location>
</feature>
<feature type="region of interest" description="Required for interaction with TNFAIP3">
    <location>
        <begin position="251"/>
        <end position="419"/>
    </location>
</feature>
<feature type="region of interest" description="Leucine-zipper" evidence="2">
    <location>
        <begin position="322"/>
        <end position="343"/>
    </location>
</feature>
<feature type="region of interest" description="Disordered" evidence="4">
    <location>
        <begin position="358"/>
        <end position="395"/>
    </location>
</feature>
<feature type="region of interest" description="Interaction with CYLD" evidence="19">
    <location>
        <begin position="382"/>
        <end position="419"/>
    </location>
</feature>
<feature type="coiled-coil region" evidence="2">
    <location>
        <begin position="49"/>
        <end position="356"/>
    </location>
</feature>
<feature type="compositionally biased region" description="Low complexity" evidence="4">
    <location>
        <begin position="373"/>
        <end position="386"/>
    </location>
</feature>
<feature type="binding site" evidence="3">
    <location>
        <position position="397"/>
    </location>
    <ligand>
        <name>Zn(2+)</name>
        <dbReference type="ChEBI" id="CHEBI:29105"/>
    </ligand>
</feature>
<feature type="binding site" evidence="3">
    <location>
        <position position="400"/>
    </location>
    <ligand>
        <name>Zn(2+)</name>
        <dbReference type="ChEBI" id="CHEBI:29105"/>
    </ligand>
</feature>
<feature type="binding site" evidence="3">
    <location>
        <position position="413"/>
    </location>
    <ligand>
        <name>Zn(2+)</name>
        <dbReference type="ChEBI" id="CHEBI:29105"/>
    </ligand>
</feature>
<feature type="binding site" evidence="3">
    <location>
        <position position="417"/>
    </location>
    <ligand>
        <name>Zn(2+)</name>
        <dbReference type="ChEBI" id="CHEBI:29105"/>
    </ligand>
</feature>
<feature type="modified residue" description="Phosphoserine; by IKKB" evidence="18">
    <location>
        <position position="31"/>
    </location>
</feature>
<feature type="modified residue" description="Phosphoserine; by IKKB" evidence="18">
    <location>
        <position position="43"/>
    </location>
</feature>
<feature type="modified residue" description="Phosphoserine" evidence="35">
    <location>
        <position position="68"/>
    </location>
</feature>
<feature type="modified residue" description="Phosphoserine; by ATM" evidence="29">
    <location>
        <position position="85"/>
    </location>
</feature>
<feature type="modified residue" description="Phosphoserine; by IKKB" evidence="18">
    <location>
        <position position="376"/>
    </location>
</feature>
<feature type="modified residue" description="Phosphoserine" evidence="56 77">
    <location>
        <position position="387"/>
    </location>
</feature>
<feature type="disulfide bond" description="Interchain" evidence="37">
    <location>
        <position position="54"/>
    </location>
</feature>
<feature type="disulfide bond" description="Interchain" evidence="37">
    <location>
        <position position="347"/>
    </location>
</feature>
<feature type="cross-link" description="Glycyl lysine isopeptide (Lys-Gly) (interchain with G-Cter in ubiquitin)" evidence="49">
    <location>
        <position position="111"/>
    </location>
</feature>
<feature type="cross-link" description="Glycyl lysine isopeptide (Lys-Gly) (interchain with G-Cter in ubiquitin)" evidence="49">
    <location>
        <position position="139"/>
    </location>
</feature>
<feature type="cross-link" description="Glycyl lysine isopeptide (Lys-Gly) (interchain with G-Cter in ubiquitin)" evidence="49">
    <location>
        <position position="143"/>
    </location>
</feature>
<feature type="cross-link" description="Glycyl lysine isopeptide (Lys-Gly) (interchain with G-Cter in ubiquitin)" evidence="49">
    <location>
        <position position="226"/>
    </location>
</feature>
<feature type="cross-link" description="Glycyl lysine isopeptide (Lys-Gly) (interchain with G-Cter in ubiquitin)" evidence="49">
    <location>
        <position position="246"/>
    </location>
</feature>
<feature type="cross-link" description="Glycyl lysine isopeptide (Lys-Gly) (interchain with G-Cter in ubiquitin)" evidence="49">
    <location>
        <position position="264"/>
    </location>
</feature>
<feature type="cross-link" description="Glycyl lysine isopeptide (Lys-Gly) (interchain with G-Cter in SUMO); alternate" evidence="20">
    <location>
        <position position="277"/>
    </location>
</feature>
<feature type="cross-link" description="Glycyl lysine isopeptide (Lys-Gly) (interchain with G-Cter in ubiquitin); alternate" evidence="20 49">
    <location>
        <position position="277"/>
    </location>
</feature>
<feature type="cross-link" description="Glycyl lysine isopeptide (Lys-Gly) (interchain with G-Cter in ubiquitin)" evidence="49">
    <location>
        <position position="283"/>
    </location>
</feature>
<feature type="cross-link" description="Glycyl lysine isopeptide (Lys-Gly) (interchain with G-Cter in ubiquitin)" evidence="27 33 42 49">
    <location>
        <position position="285"/>
    </location>
</feature>
<feature type="cross-link" description="Glycyl lysine isopeptide (Lys-Gly) (interchain with G-Cter in ubiquitin)" evidence="49">
    <location>
        <position position="292"/>
    </location>
</feature>
<feature type="cross-link" description="Glycyl lysine isopeptide (Lys-Gly) (interchain with G-Cter in ubiquitin)" evidence="49">
    <location>
        <position position="302"/>
    </location>
</feature>
<feature type="cross-link" description="Glycyl lysine isopeptide (Lys-Gly) (interchain with G-Cter in SUMO); alternate" evidence="20">
    <location>
        <position position="309"/>
    </location>
</feature>
<feature type="cross-link" description="Glycyl lysine isopeptide (Lys-Gly) (interchain with G-Cter in ubiquitin); alternate" evidence="20 42 46 49">
    <location>
        <position position="309"/>
    </location>
</feature>
<feature type="cross-link" description="Glycyl lysine isopeptide (Lys-Gly) (interchain with G-Cter in ubiquitin)" evidence="46">
    <location>
        <position position="321"/>
    </location>
</feature>
<feature type="cross-link" description="Glycyl lysine isopeptide (Lys-Gly) (interchain with G-Cter in ubiquitin)" evidence="1">
    <location>
        <position position="325"/>
    </location>
</feature>
<feature type="cross-link" description="Glycyl lysine isopeptide (Lys-Gly) (interchain with G-Cter in ubiquitin and interchain with MARCHF2)" evidence="49 68">
    <location>
        <position position="326"/>
    </location>
</feature>
<feature type="cross-link" description="Glycyl lysine isopeptide (Lys-Gly) (interchain with G-Cter in ubiquitin)" evidence="21">
    <location>
        <position position="399"/>
    </location>
</feature>
<feature type="splice variant" id="VSP_041000" description="In isoform 2." evidence="74">
    <original>M</original>
    <variation>MALVIQVGKLRPREVRTPQTINPSLFPSLPVKLSSIIEVPSGGERCCSRRTLVYKARAFWKGAPLPCWM</variation>
    <location>
        <position position="1"/>
    </location>
</feature>
<feature type="splice variant" id="VSP_041001" description="In isoform 3." evidence="73">
    <location>
        <begin position="174"/>
        <end position="224"/>
    </location>
</feature>
<feature type="splice variant" id="VSP_041002" description="In isoform 3." evidence="73">
    <location>
        <begin position="257"/>
        <end position="304"/>
    </location>
</feature>
<feature type="sequence variant" id="VAR_026491" description="In IP; shows the same luciferase activity as the control; dbSNP:rs148695964." evidence="14 24">
    <original>E</original>
    <variation>K</variation>
    <location>
        <position position="57"/>
    </location>
</feature>
<feature type="sequence variant" id="VAR_026492" description="In IP; only 46.3% of the activation obtained with the wild-type protein." evidence="24">
    <location>
        <position position="90"/>
    </location>
</feature>
<feature type="sequence variant" id="VAR_026493" description="In dbSNP:rs179363896." evidence="24">
    <original>D</original>
    <variation>N</variation>
    <location>
        <position position="113"/>
    </location>
</feature>
<feature type="sequence variant" id="VAR_026494" description="In IP; shows the same luciferase activity as the control; dbSNP:rs179363895." evidence="24">
    <original>R</original>
    <variation>W</variation>
    <location>
        <position position="123"/>
    </location>
</feature>
<feature type="sequence variant" id="VAR_026495" description="In EDAID1; dbSNP:rs137853328." evidence="16 23">
    <original>L</original>
    <variation>R</variation>
    <location>
        <position position="153"/>
    </location>
</feature>
<feature type="sequence variant" id="VAR_072603" description="In IP." evidence="57">
    <original>L</original>
    <variation>P</variation>
    <location>
        <position position="170"/>
    </location>
</feature>
<feature type="sequence variant" id="VAR_031958" description="In IMD33; dbSNP:rs179363866." evidence="32">
    <original>R</original>
    <variation>G</variation>
    <location>
        <position position="173"/>
    </location>
</feature>
<feature type="sequence variant" id="VAR_072604" description="In IP; dbSNP:rs1057520292." evidence="57">
    <original>R</original>
    <variation>Q</variation>
    <location>
        <position position="173"/>
    </location>
</feature>
<feature type="sequence variant" id="VAR_011320" description="In EDAID1; dbSNP:rs179363868." evidence="11">
    <original>R</original>
    <variation>P</variation>
    <location>
        <position position="175"/>
    </location>
</feature>
<feature type="sequence variant" id="VAR_072605" description="In IP; dbSNP:rs1198984417." evidence="47">
    <original>Q</original>
    <variation>H</variation>
    <location>
        <position position="183"/>
    </location>
</feature>
<feature type="sequence variant" id="VAR_011321" description="In EDAID1; dbSNP:rs179363869." evidence="11">
    <original>L</original>
    <variation>P</variation>
    <location>
        <position position="227"/>
    </location>
</feature>
<feature type="sequence variant" id="VAR_011322" description="In EDAID1; dbSNP:rs137853330." evidence="11">
    <original>A</original>
    <variation>G</variation>
    <location>
        <position position="288"/>
    </location>
</feature>
<feature type="sequence variant" id="VAR_011323" description="In EDAID1; abolishes binding to polyubiquitin ('K63'-linked and linear) and greatly impairs tandem ubiquitin binding; dbSNP:rs179363867." evidence="11 30 43 52">
    <original>D</original>
    <variation>N</variation>
    <location>
        <position position="311"/>
    </location>
</feature>
<feature type="sequence variant" id="VAR_072606" description="In IP." evidence="57">
    <original>A</original>
    <variation>P</variation>
    <location>
        <position position="314"/>
    </location>
</feature>
<feature type="sequence variant" id="VAR_031959" description="In IMD33; greatly impairs tandem ubiquitin binding. Impairs oligomerization, impairs binding of 'Lys-63'-linked ubiuitin and linear tetra-ubiquitin, impairs TNF-induced NF-kappa-B activation; dbSNP:rs137853331." evidence="31 43 45">
    <original>E</original>
    <variation>A</variation>
    <location>
        <position position="315"/>
    </location>
</feature>
<feature type="sequence variant" id="VAR_031960" description="In IMD33; impairs tandem ubiquitin binding; dbSNP:rs137853332." evidence="31 43">
    <original>R</original>
    <variation>Q</variation>
    <location>
        <position position="319"/>
    </location>
</feature>
<feature type="sequence variant" id="VAR_072607" description="In IP." evidence="57">
    <original>L</original>
    <variation>P</variation>
    <location>
        <position position="322"/>
    </location>
</feature>
<feature type="sequence variant" id="VAR_042666" description="In IP; diminishes interaction with TRAF6 and polyubiquitination, greatly impairs tandem ubiquitin binding. Impairs oligomerization, greatly impairs binding of 'Lys-63'-linked ubiuitin and linear tetra-ubiquitin, impairs TNF-induced NF-kappa-B activation; dbSNP:rs179363865." evidence="34 43 45">
    <original>A</original>
    <variation>P</variation>
    <location>
        <position position="323"/>
    </location>
</feature>
<feature type="sequence variant" id="VAR_011324" description="In EDAID1; dbSNP:rs137853327." evidence="10">
    <original>D</original>
    <variation>V</variation>
    <location>
        <position position="406"/>
    </location>
</feature>
<feature type="sequence variant" id="VAR_009182" description="In IP; impairs binding to ubiquitin; dbSNP:rs137853322." evidence="6 14 41">
    <original>M</original>
    <variation>V</variation>
    <location>
        <position position="407"/>
    </location>
</feature>
<feature type="sequence variant" id="VAR_072608" description="In IP." evidence="57">
    <original>H</original>
    <variation>Y</variation>
    <location>
        <position position="413"/>
    </location>
</feature>
<feature type="sequence variant" id="VAR_011325" description="In EDAID1; dbSNP:rs137853326." evidence="7 11">
    <original>C</original>
    <variation>F</variation>
    <location>
        <position position="417"/>
    </location>
</feature>
<feature type="sequence variant" id="VAR_011326" description="In EDAID1; loss of sumoylation; dbSNP:rs137853325." evidence="7 10 11 16 20 23">
    <original>C</original>
    <variation>R</variation>
    <location>
        <position position="417"/>
    </location>
</feature>
<feature type="sequence variant" id="VAR_026496" description="In IMD33; dbSNP:rs137853326." evidence="23">
    <original>C</original>
    <variation>Y</variation>
    <location>
        <position position="417"/>
    </location>
</feature>
<feature type="mutagenesis site" description="Increases formation of homodimers." evidence="35">
    <original>S</original>
    <variation>A</variation>
    <location>
        <position position="68"/>
    </location>
</feature>
<feature type="mutagenesis site" description="Abolishes interaction with IKBKB; abolishes TNF-alpha induced NF-kappa-B activity." evidence="35">
    <original>S</original>
    <variation>E</variation>
    <location>
        <position position="68"/>
    </location>
</feature>
<feature type="mutagenesis site" description="Decreases ubiquitination and abolishes nuclear export." evidence="29">
    <original>S</original>
    <variation>A</variation>
    <location>
        <position position="85"/>
    </location>
</feature>
<feature type="mutagenesis site" description="No change in the ubiquitination level; when associated with R-399." evidence="27">
    <original>K</original>
    <variation>R</variation>
    <location>
        <position position="115"/>
    </location>
</feature>
<feature type="mutagenesis site" description="No change in the ubiquitination level; when associated with R-399." evidence="27">
    <original>K</original>
    <variation>R</variation>
    <location>
        <position position="224"/>
    </location>
</feature>
<feature type="mutagenesis site" description="Partial abolition of sumoylation. Abolishes sumoylation and IKK activation; when associated with A-309." evidence="20">
    <original>K</original>
    <variation>A</variation>
    <location>
        <position position="277"/>
    </location>
</feature>
<feature type="mutagenesis site" description="Decreased ability to activate NF-kappa-B. Important decrease in the ubiquitination level; when associated with R-399." evidence="27 33">
    <original>K</original>
    <variation>R</variation>
    <location>
        <position position="285"/>
    </location>
</feature>
<feature type="mutagenesis site" description="No effet on oligomerization,impairs binding of 'Lys-63'-linked ubiuitin and linear tetra-ubiquitin, impairs TNF-induced NF-kappa-B activation." evidence="45">
    <original>E</original>
    <variation>A</variation>
    <location>
        <position position="296"/>
    </location>
</feature>
<feature type="mutagenesis site" description="Greatly impairs tandem ubiquitin binding." evidence="43">
    <original>V</original>
    <variation>D</variation>
    <location>
        <position position="300"/>
    </location>
</feature>
<feature type="mutagenesis site" description="Impairs tandem ubiquitin binding." evidence="43">
    <original>L</original>
    <variation>A</variation>
    <location>
        <position position="301"/>
    </location>
</feature>
<feature type="mutagenesis site" description="No effect on MARCH2F-mediated K48-linked ubiquitination." evidence="68">
    <original>K</original>
    <variation>R</variation>
    <location>
        <position position="302"/>
    </location>
</feature>
<feature type="mutagenesis site" description="Complete loss of cleavage by HAV protease 3c." evidence="59">
    <original>Q</original>
    <variation>A</variation>
    <location>
        <position position="304"/>
    </location>
</feature>
<feature type="mutagenesis site" description="Impairs tandem ubiquitin binding." evidence="43">
    <original>Q</original>
    <variation>A</variation>
    <location>
        <position position="304"/>
    </location>
</feature>
<feature type="mutagenesis site" description="Greatly impairs tandem ubiquitin binding." evidence="43">
    <original>I</original>
    <variation>N</variation>
    <location>
        <position position="307"/>
    </location>
</feature>
<feature type="mutagenesis site" description="Greatly impairs tandem ubiquitin binding." evidence="43">
    <original>Y</original>
    <variation>A</variation>
    <location>
        <position position="308"/>
    </location>
</feature>
<feature type="mutagenesis site" description="Partial abolition of sumoylation. Abolishes sumoylation and IKK activation; when associated with A-277. No effect on MARCH2F-mediated K48-linked ubiquitination." evidence="20 68">
    <original>K</original>
    <variation>A</variation>
    <location>
        <position position="309"/>
    </location>
</feature>
<feature type="mutagenesis site" description="Greatly impairs tandem ubiquitin binding,impairs oligomerization, impairs TNF-induced NF-kappa-B activation." evidence="43 45">
    <original>F</original>
    <variation>A</variation>
    <location>
        <position position="312"/>
    </location>
</feature>
<feature type="mutagenesis site" description="MNo effet on oligomerization, preferentially binds tri-ubiquitin chains ('Lys-48' or 'Lys-63'-linked)." evidence="43 45">
    <original>F</original>
    <variation>W</variation>
    <location>
        <position position="312"/>
    </location>
</feature>
<feature type="mutagenesis site" description="Impairs tandem ubiquitin binding." evidence="43 45">
    <original>F</original>
    <variation>Y</variation>
    <location>
        <position position="312"/>
    </location>
</feature>
<feature type="mutagenesis site" description="Impairs tandem ubiquitin binding." evidence="43">
    <original>Q</original>
    <variation>A</variation>
    <location>
        <position position="313"/>
    </location>
</feature>
<feature type="mutagenesis site" description="Greatly impairs tandem ubiquitin binding." evidence="45">
    <original>E</original>
    <variation>Q</variation>
    <location>
        <position position="315"/>
    </location>
</feature>
<feature type="mutagenesis site" description="Greatly impairs tandem ubiquitin binding." evidence="43">
    <original>Q</original>
    <variation>A</variation>
    <variation>W</variation>
    <location>
        <position position="317"/>
    </location>
</feature>
<feature type="mutagenesis site" description="No effect on MARCH2F-mediated K48-linked ubiquitination." evidence="68">
    <original>K</original>
    <variation>R</variation>
    <location>
        <position position="321"/>
    </location>
</feature>
<feature type="mutagenesis site" description="Greatly impairs tandem ubiquitin binding." evidence="45">
    <original>A</original>
    <variation>D</variation>
    <location>
        <position position="323"/>
    </location>
</feature>
<feature type="mutagenesis site" description="No effect on MARCH2F-mediated K48-linked ubiquitination." evidence="68">
    <original>K</original>
    <variation>R</variation>
    <location>
        <position position="325"/>
    </location>
</feature>
<feature type="mutagenesis site" description="Abolishes MARCH2F-mediated K48-linked ubiquitination and subsequent suppression of antiviral and antibacterial innate immune response." evidence="68">
    <original>K</original>
    <variation>R</variation>
    <location>
        <position position="326"/>
    </location>
</feature>
<feature type="mutagenesis site" description="Impairs oligomerization, impairs binding of 'Lys-63'-linked ubiuitin, impairs TNF-induced NF-kappa-B activation; when associated with A-336." evidence="30 45">
    <original>L</original>
    <variation>A</variation>
    <location>
        <position position="329"/>
    </location>
</feature>
<feature type="mutagenesis site" description="Abolished ubiquitin-binding." evidence="30 38 45">
    <original>L</original>
    <variation>P</variation>
    <location>
        <position position="329"/>
    </location>
</feature>
<feature type="mutagenesis site" description="Impairs oligomerization, impairs binding of 'Lys-63'-linked ubiuitin, impairs TNF-induced NF-kappa-B activation; when associated with A-329." evidence="45">
    <original>L</original>
    <variation>A</variation>
    <location>
        <position position="336"/>
    </location>
</feature>
<feature type="mutagenesis site" description="No effect on MARCH2F-mediated K48-linked ubiquitination." evidence="68">
    <original>K</original>
    <variation>R</variation>
    <location>
        <position position="342"/>
    </location>
</feature>
<feature type="mutagenesis site" description="No effect on MARCH2F-mediated K48-linked ubiquitination." evidence="68">
    <original>K</original>
    <variation>R</variation>
    <location>
        <position position="344"/>
    </location>
</feature>
<feature type="mutagenesis site" description="No effect on MARCH2F-mediated K48-linked ubiquitination." evidence="68">
    <original>K</original>
    <variation>R</variation>
    <location>
        <position position="358"/>
    </location>
</feature>
<feature type="mutagenesis site" description="Abolishes BCL10-mediated but not RIPK2-mediated ubiquitination. Important decrease in the ubiquitination level; when associated with R-285. No change in the ubiquitination level; when associated with R-115 or R-224." evidence="21 27">
    <original>K</original>
    <variation>R</variation>
    <location>
        <position position="399"/>
    </location>
</feature>
<feature type="mutagenesis site" description="Abolishes binding to polyubiquitin." evidence="41">
    <original>V</original>
    <variation>S</variation>
    <location>
        <position position="414"/>
    </location>
</feature>
<feature type="mutagenesis site" description="Impairs binding to polyubiquitin." evidence="41">
    <original>M</original>
    <variation>S</variation>
    <location>
        <position position="415"/>
    </location>
</feature>
<feature type="sequence conflict" description="In Ref. 1; AAD12183." evidence="75" ref="1">
    <original>S</original>
    <variation>R</variation>
    <location>
        <position position="341"/>
    </location>
</feature>
<feature type="sequence conflict" description="In Ref. 1; AAD12183." evidence="75" ref="1">
    <original>S</original>
    <variation>R</variation>
    <location>
        <position position="387"/>
    </location>
</feature>
<feature type="helix" evidence="83">
    <location>
        <begin position="38"/>
        <end position="129"/>
    </location>
</feature>
<feature type="turn" evidence="80">
    <location>
        <begin position="194"/>
        <end position="196"/>
    </location>
</feature>
<feature type="helix" evidence="80">
    <location>
        <begin position="197"/>
        <end position="249"/>
    </location>
</feature>
<feature type="helix" evidence="81">
    <location>
        <begin position="260"/>
        <end position="268"/>
    </location>
</feature>
<feature type="helix" evidence="81">
    <location>
        <begin position="271"/>
        <end position="295"/>
    </location>
</feature>
<feature type="helix" evidence="81">
    <location>
        <begin position="297"/>
        <end position="341"/>
    </location>
</feature>
<feature type="strand" evidence="79">
    <location>
        <begin position="394"/>
        <end position="396"/>
    </location>
</feature>
<feature type="turn" evidence="82">
    <location>
        <begin position="398"/>
        <end position="400"/>
    </location>
</feature>
<feature type="strand" evidence="78">
    <location>
        <begin position="403"/>
        <end position="406"/>
    </location>
</feature>
<feature type="helix" evidence="78">
    <location>
        <begin position="407"/>
        <end position="416"/>
    </location>
</feature>
<name>NEMO_HUMAN</name>
<keyword id="KW-0002">3D-structure</keyword>
<keyword id="KW-0025">Alternative splicing</keyword>
<keyword id="KW-0175">Coiled coil</keyword>
<keyword id="KW-0963">Cytoplasm</keyword>
<keyword id="KW-0903">Direct protein sequencing</keyword>
<keyword id="KW-0225">Disease variant</keyword>
<keyword id="KW-1015">Disulfide bond</keyword>
<keyword id="KW-0227">DNA damage</keyword>
<keyword id="KW-0038">Ectodermal dysplasia</keyword>
<keyword id="KW-0945">Host-virus interaction</keyword>
<keyword id="KW-1017">Isopeptide bond</keyword>
<keyword id="KW-0479">Metal-binding</keyword>
<keyword id="KW-0539">Nucleus</keyword>
<keyword id="KW-0987">Osteopetrosis</keyword>
<keyword id="KW-0597">Phosphoprotein</keyword>
<keyword id="KW-1267">Proteomics identification</keyword>
<keyword id="KW-1185">Reference proteome</keyword>
<keyword id="KW-0804">Transcription</keyword>
<keyword id="KW-0805">Transcription regulation</keyword>
<keyword id="KW-0832">Ubl conjugation</keyword>
<keyword id="KW-0862">Zinc</keyword>
<keyword id="KW-0863">Zinc-finger</keyword>
<protein>
    <recommendedName>
        <fullName evidence="75">NF-kappa-B essential modulator</fullName>
        <shortName evidence="75">NEMO</shortName>
    </recommendedName>
    <alternativeName>
        <fullName>FIP-3</fullName>
    </alternativeName>
    <alternativeName>
        <fullName>IkB kinase-associated protein 1</fullName>
        <shortName>IKKAP1</shortName>
    </alternativeName>
    <alternativeName>
        <fullName>Inhibitor of nuclear factor kappa-B kinase subunit gamma</fullName>
        <shortName>I-kappa-B kinase subunit gamma</shortName>
        <shortName>IKK-gamma</shortName>
        <shortName>IKKG</shortName>
        <shortName>IkB kinase subunit gamma</shortName>
    </alternativeName>
    <alternativeName>
        <fullName>NF-kappa-B essential modifier</fullName>
    </alternativeName>
</protein>